<sequence length="4307" mass="492622">MANGTADVRKLFIFTTTQNYFGLMSELWDQPLLCNCLEINNFLDDGNQMLLRVQRSDAGISFSNTIEFGDTKDKVLVFFKLRPEVITDENLHDNILVSSMLESPISSLYQAVRQVFAPMLLKDQEWSRNFDPKLQNLLSELEAGLGIVLRRSDTNLTKLKFKEDDTRGILTPSDEFQFWIEQAHRGNKQISKERANYFKELFETIAREFYNLDSLSLLEVVDLVETTQDVVDDVWRQTEHDHYPESRMLHLLDIIGGSFGRFVQKKLGTLNLWEDPYYLVKESLKAGISICEQWVIVCNHLTGQVWQRYVPHPWKNEKYFPETLDKLGKRLEEVLAIRTIHEKFLYFLPASEEKIICLTRVFEPFTGLNPVQYNPYTEPLWKAAVSQYEKIIAPAEQKIAGKLKNYISEIQDSPQQLLQAFLKYKELVKRPTISKELMLERETLLARLVDSIKDFRLDFENRCRGIPGDASGPLSGKNLSEVVNSIVWVRQLELKVDDTIKIAEALLSDLPGFRCFHQSAKDLLDQLKLYEQEQFDDWSRDIQSGLSDSRSGLCIEASSRIMELDSNDGLLKVHYSDRLVILLREVRQLSALGFVIPAKIQQVANIAQKFCKQAIILKQVAHFYNSIDQQMIQSQRPMMLQSALAFEQIIKNSKAGSGGKSQITWDNPKELEGYIQKLQNAAERLATENRKLRKWHTTFCEKVVVLMNIDLLRQQQRWKDGLQELRTGLATVEAQGFQASDMHAWKQHWNHQLYKALEHQYQMGLEALNENLPEINIDLTYKQGRLQFRPPFEEIRAKYYREMKRFIGIPNQFKGVGEAGDESIFSIMIDRNASGFLTIFSKAEDLFRRLSAVLHQHKEWIVIGQVDMEALVEKHLFTVHDWEKNFKALKIKGKEVERLPSAVKVDCLNINCNPVKTVIDDLIQKLFDLLVLSLKKSIQAHLHEIDTFVTEAMEVLTIMPQSVEEIGDANLQYSKLQERKPEILPLFQEAEDKNRLLRTVAGGGLETISNLKAKWDKFELMMESHQLMIKDQIEVMKGNVKSRLQIYYQELEKFKARWDQLKPGDDVIETGQHNTLDKSAKLIKEKKIEFDDLEVTRKKLVDDCHHFRLEEPNFSLASSISKDIESCAQIWAFYEEFQQGFQEMANEDWITFRTKTYLFEEFLMNWHDRLRKVEEHSVMTVKLQSEVDKYKIVIPILKYVRGEHLSPDHWLDLFRLLGLPRGTSLEKLLFGDLLRVADTIVAKAADLKDLNSRAQGEVTIREALRELDLWGVGAVFTLIDYEDSQSRTMKLIKDWKDIVNQVGDNRCLLQSLKDSPYYKGFEDKVSIWERKLAELDEYLQNLNHIQRKWVYLEPIFGRGALPKEQTRFNRVDEDFRSIMTDIKKDNRVTTLTTHAGIRNSLLTILDQLQRCQKSLNEFLEEKRSAFPRFYFIGDDDLLEILGQSTNPSVIQSHLKKLFAGINSVCFDEKSKHITAMKSLEGEVVPFKNKVPLSNNVETWLNDLALEMKKTLEQLLKECVTTGRSSQGAVDPSLFPSQILCLAEQIKFTEDVENAIKDHSLHQIETQLVNKLEQYTNIDTSSEDPGNTESGILELKLKALILDIIHNIDVVKQLNQIQVHTTEDWAWKKQLRFYMKSDHTCCVQMVDSEFQYTYEYQGNASKLVYTPLTDKCYLTLTQAMKMGLGGNPYGPAGTGKTESVKALGGLLGRQVLVFNCDEGIDVKSMGRIFVGLVKCGAWGCFDEFNRLEESVLSAVSMQIQTIQDALKNHRTVCELLGKEVEVNSNSGIFITMNPAGKGYGGRQKLPDNLKQLFRPVAMSHPDNELIAEVILYSEGFKDAKVLSRKLVAIFNLSRELLTPQQHYDWGLRALKTVLRGSGNLLRQLNKSGTTQNANESHIVVQALRLNTMSKFTFTDCTRFDALIKDVFPGIELKEVEYDELSAALKQVFEEANYEIIPNQIKKALELYEQLCQRMGVVIVGPSGAGKSTLWRMLRAALCKTGKVVKQYTMNPKAMPRYQLLGHIDMDTREWSDGVLTNSARQVVREPQDVSSWIICDGDIDPEWIESLNSVLDDNRLLTMPSGERIQFGPNVNFVFETHDLSCASPATISRMGMIFLSDEETDLNSLIKSWLRNQPAEYRNNLENWIGDYFEKALQWVLKQNDYVVETSLVGTVMNGLSHLHGCRDHDEFIINLIRGLGGNLNMKSRLEFTKEVFHWARESPPDFHKPMDTYYDSTRGRLATYVLKKPEDLTADDFSNGLTLPVIQTPDMQRGLDYFKPWLSSDTKQPFILVGPEGCGKGMLLRYAFSQLRSTQIATVHCSAQTTSRHLLQKLSQTCMVISTNTGRVYRPKDCERLVLYLKDINLPKLDKWGTSTLVAFLQQVLTYQGFYDENLEWVGLENIQIVASMSAGGRLGRHKLTTRFTSIVRLCSIDYPEREQLQTIYGAYLEPVLHKNLKNHSIWGSSSKIYLLAGSMVQVYEQVRAKFTVDDYSHYFFTPCILTQWVLGLFRYDLEGGSSNHPLDYVLEIVAYEARRLFRDKIVGAKELHLFDIILTSVFQGDWGSDILDNMSDSFYVTWGARHNSGARAAPGQPLPPHGKPLGKLNSTDLKDVIKKGLIHYGRDNQNLDILLFHEVLEYMSRIDRVLSFPGGSLLLAGRSGVGRRTITSLVSHMHGAVLFSPKISRGYELKQFKNDLKHVLQLAGIEAQQVVLLLEDYQFVHPTFLEMINSLLSSGEVPGLYTLEELEPLLLPLKDQASQDGFFGPVFNYFTYRIQQNLHIVLIMDSANSNFMINCESNPALHKKCQVLWMEGWSNSSMKKIPEMLFSETGGGEKYNDKKRKEEKKKNSVDPDFLKSFLLIHESCKAYGATPSRYMTFLHVYSAISSSKKKELLKRQSHLQAGVSKLNEAKALVDELNRKAGEQSVLLKTKQDEADAALQMITVSMQDASEQKTELERLKHRIAEEVVKIEERKNKIDDELKEVQPLVNEAKLAVGNIKPESLSEIRSLRMPPDVIRDILEGVLRLMGIFDTSWVSMKSFLAKRGVREDIATFDARNISKEIRESVEELLFKNKGSFDPKNAKRASTAAAPLAAWVKANIQYSHVLERIHPLETEQAGLESNLKKTEDRKRKLEELLNSVGQKVSELKEKFQSRTSEAAKLEAEVSKAQETIKAAEVLINQLDREHKRWNAQVVEITEELATLPKRAQLAAAFITYLSAAPESLRKTCLEEWTKSAGLEKFDLRRFLCTESEQLIWKSEGLPSDDLSIENALVILQSRVCPFLIDPSSQATEWLKTHLKDSRLEVINQQDSNFITALELAVRFGKTLIIQEMDGVEPVLYPLLRRDLVAQGPRYVVQIGDKIIDYNEEFRLFLSTRNPNPFIPPDAASIVTEVNFTTTRSGLRGQLLALTIQHEKPDLEEQKTKLLQQEEDKKIQLAKLEESLLETLATSQGNILENKDLIESLNQTKASSALIQESLKESYKLQISLDQERDAYLPLAESASKMYFIISDLSKINNMYRFSLAAFLRLFQRALQNKQDSENTEQRIQSLISSLQHMVYEYICRCLFKADQLMFALHFVRGMHPELFQENEWDTFTGVVVGDMLRKADSQQKIRDQLPSWIDQERSWAVATLKIALPSLYQTLCFEDAALWRTYYNNSMCEQEFPSILAKKVSLFQQILVVQALRPDRLQSAMALFACKTLGLKEVSPLPLNLKRLYKETLEIEPILIIISPGADPSQELQELANAERSGECYHQVAMGQGQADLAIQMLKECARNGDWLCLKNLHLVVSWLPVLEKELNTLQPKDTFRLWLTAEVHPNFTPILLQSSLKITYESPPGLKKNLMRTYESWTPEQISKKDNTHRAHALFSLAWFHAACQERRNYIPQGWTKFYEFSLSDLRAGYNIIDRLFDGAKDVQWEFVHGLLENAIYGGRIDNYFDLRVLQSYLKQFFNSSVIDVFNQRNKKSIFPYSVSLPQSCSILDYRAVIEKIPEDDKPSFFGLPANIARSSQRMISSQVISQLRILGRSITAGSKFDREIWSNELSPVLNLWKKLNQNSNLIHQKVPPPNDRQGSPILSFIILEQFNAIRLVQSVHQSLAALSKVIRGTTLLSSEVQKLASALLNQKCPLAWQSKWEGPEDPLQYLRGLVARALAIQNWVDKAEKQALLSETLDLSELFHPDTFLNALRQETARAVGRSVDSLKFVASWKGRLQEAKLQIKISGLLLEGCSFDGNQLSENQLDSPSVSSVLPCFMGWIPQDACGPYSPDECISLPVYTSAERDRVVTNIDVPCGGNQDQWIQCGAALFLKNQ</sequence>
<organism>
    <name type="scientific">Homo sapiens</name>
    <name type="common">Human</name>
    <dbReference type="NCBI Taxonomy" id="9606"/>
    <lineage>
        <taxon>Eukaryota</taxon>
        <taxon>Metazoa</taxon>
        <taxon>Chordata</taxon>
        <taxon>Craniata</taxon>
        <taxon>Vertebrata</taxon>
        <taxon>Euteleostomi</taxon>
        <taxon>Mammalia</taxon>
        <taxon>Eutheria</taxon>
        <taxon>Euarchontoglires</taxon>
        <taxon>Primates</taxon>
        <taxon>Haplorrhini</taxon>
        <taxon>Catarrhini</taxon>
        <taxon>Hominidae</taxon>
        <taxon>Homo</taxon>
    </lineage>
</organism>
<dbReference type="EMBL" id="AB231765">
    <property type="protein sequence ID" value="BAE46899.1"/>
    <property type="molecule type" value="mRNA"/>
</dbReference>
<dbReference type="EMBL" id="AB231766">
    <property type="protein sequence ID" value="BAE17138.1"/>
    <property type="molecule type" value="mRNA"/>
</dbReference>
<dbReference type="EMBL" id="AP000817">
    <property type="status" value="NOT_ANNOTATED_CDS"/>
    <property type="molecule type" value="Genomic_DNA"/>
</dbReference>
<dbReference type="EMBL" id="AP001486">
    <property type="status" value="NOT_ANNOTATED_CDS"/>
    <property type="molecule type" value="Genomic_DNA"/>
</dbReference>
<dbReference type="EMBL" id="AP002829">
    <property type="status" value="NOT_ANNOTATED_CDS"/>
    <property type="molecule type" value="Genomic_DNA"/>
</dbReference>
<dbReference type="EMBL" id="AP002961">
    <property type="status" value="NOT_ANNOTATED_CDS"/>
    <property type="molecule type" value="Genomic_DNA"/>
</dbReference>
<dbReference type="EMBL" id="AP003382">
    <property type="status" value="NOT_ANNOTATED_CDS"/>
    <property type="molecule type" value="Genomic_DNA"/>
</dbReference>
<dbReference type="EMBL" id="AP003461">
    <property type="status" value="NOT_ANNOTATED_CDS"/>
    <property type="molecule type" value="Genomic_DNA"/>
</dbReference>
<dbReference type="EMBL" id="AK021818">
    <property type="protein sequence ID" value="BAB13905.1"/>
    <property type="status" value="ALT_INIT"/>
    <property type="molecule type" value="mRNA"/>
</dbReference>
<dbReference type="EMBL" id="AK095579">
    <property type="protein sequence ID" value="BAC04578.1"/>
    <property type="status" value="ALT_INIT"/>
    <property type="molecule type" value="mRNA"/>
</dbReference>
<dbReference type="EMBL" id="AK125524">
    <property type="protein sequence ID" value="BAC86194.1"/>
    <property type="molecule type" value="mRNA"/>
</dbReference>
<dbReference type="EMBL" id="AK131453">
    <property type="protein sequence ID" value="BAD18598.1"/>
    <property type="status" value="ALT_INIT"/>
    <property type="molecule type" value="mRNA"/>
</dbReference>
<dbReference type="EMBL" id="U53531">
    <property type="protein sequence ID" value="AAB09728.1"/>
    <property type="molecule type" value="mRNA"/>
</dbReference>
<dbReference type="EMBL" id="U20552">
    <property type="protein sequence ID" value="AAB50020.1"/>
    <property type="molecule type" value="mRNA"/>
</dbReference>
<dbReference type="EMBL" id="Z83800">
    <property type="protein sequence ID" value="CAB06054.1"/>
    <property type="molecule type" value="mRNA"/>
</dbReference>
<dbReference type="EMBL" id="BX538093">
    <property type="protein sequence ID" value="CAD98012.1"/>
    <property type="molecule type" value="mRNA"/>
</dbReference>
<dbReference type="EMBL" id="AB082528">
    <property type="protein sequence ID" value="BAC02706.2"/>
    <property type="molecule type" value="mRNA"/>
</dbReference>
<dbReference type="CCDS" id="CCDS44717.1">
    <molecule id="Q8NCM8-2"/>
</dbReference>
<dbReference type="CCDS" id="CCDS53701.1">
    <molecule id="Q8NCM8-1"/>
</dbReference>
<dbReference type="RefSeq" id="NP_001073932.1">
    <molecule id="Q8NCM8-2"/>
    <property type="nucleotide sequence ID" value="NM_001080463.2"/>
</dbReference>
<dbReference type="RefSeq" id="NP_001368.2">
    <molecule id="Q8NCM8-1"/>
    <property type="nucleotide sequence ID" value="NM_001377.2"/>
</dbReference>
<dbReference type="PDB" id="4RH7">
    <property type="method" value="X-ray"/>
    <property type="resolution" value="3.41 A"/>
    <property type="chains" value="A=1091-4307"/>
</dbReference>
<dbReference type="PDB" id="8RGG">
    <property type="method" value="EM"/>
    <property type="resolution" value="4.00 A"/>
    <property type="chains" value="B=2-4307"/>
</dbReference>
<dbReference type="PDB" id="8RGH">
    <property type="method" value="EM"/>
    <property type="resolution" value="3.90 A"/>
    <property type="chains" value="A=2-4307"/>
</dbReference>
<dbReference type="PDBsum" id="4RH7"/>
<dbReference type="PDBsum" id="8RGG"/>
<dbReference type="PDBsum" id="8RGH"/>
<dbReference type="EMDB" id="EMD-19132"/>
<dbReference type="EMDB" id="EMD-19133"/>
<dbReference type="SMR" id="Q8NCM8"/>
<dbReference type="BioGRID" id="122785">
    <property type="interactions" value="84"/>
</dbReference>
<dbReference type="CORUM" id="Q8NCM8"/>
<dbReference type="FunCoup" id="Q8NCM8">
    <property type="interactions" value="803"/>
</dbReference>
<dbReference type="IntAct" id="Q8NCM8">
    <property type="interactions" value="49"/>
</dbReference>
<dbReference type="MINT" id="Q8NCM8"/>
<dbReference type="STRING" id="9606.ENSP00000497174"/>
<dbReference type="GlyGen" id="Q8NCM8">
    <property type="glycosylation" value="5 sites, 3 N-linked glycans (3 sites), 1 O-linked glycan (1 site)"/>
</dbReference>
<dbReference type="iPTMnet" id="Q8NCM8"/>
<dbReference type="PhosphoSitePlus" id="Q8NCM8"/>
<dbReference type="SwissPalm" id="Q8NCM8"/>
<dbReference type="BioMuta" id="DYNC2H1"/>
<dbReference type="DMDM" id="311033479"/>
<dbReference type="jPOST" id="Q8NCM8"/>
<dbReference type="MassIVE" id="Q8NCM8"/>
<dbReference type="PaxDb" id="9606-ENSP00000381167"/>
<dbReference type="PeptideAtlas" id="Q8NCM8"/>
<dbReference type="ProteomicsDB" id="72909">
    <molecule id="Q8NCM8-1"/>
</dbReference>
<dbReference type="ProteomicsDB" id="72910">
    <molecule id="Q8NCM8-2"/>
</dbReference>
<dbReference type="ProteomicsDB" id="72911">
    <molecule id="Q8NCM8-3"/>
</dbReference>
<dbReference type="Pumba" id="Q8NCM8"/>
<dbReference type="Antibodypedia" id="51715">
    <property type="antibodies" value="51 antibodies from 13 providers"/>
</dbReference>
<dbReference type="DNASU" id="79659"/>
<dbReference type="Ensembl" id="ENST00000334267.11">
    <molecule id="Q8NCM8-3"/>
    <property type="protein sequence ID" value="ENSP00000334021.7"/>
    <property type="gene ID" value="ENSG00000187240.17"/>
</dbReference>
<dbReference type="Ensembl" id="ENST00000375735.7">
    <molecule id="Q8NCM8-1"/>
    <property type="protein sequence ID" value="ENSP00000364887.2"/>
    <property type="gene ID" value="ENSG00000187240.17"/>
</dbReference>
<dbReference type="Ensembl" id="ENST00000650373.2">
    <molecule id="Q8NCM8-2"/>
    <property type="protein sequence ID" value="ENSP00000497174.1"/>
    <property type="gene ID" value="ENSG00000187240.17"/>
</dbReference>
<dbReference type="GeneID" id="79659"/>
<dbReference type="KEGG" id="hsa:79659"/>
<dbReference type="MANE-Select" id="ENST00000375735.7">
    <property type="protein sequence ID" value="ENSP00000364887.2"/>
    <property type="RefSeq nucleotide sequence ID" value="NM_001377.3"/>
    <property type="RefSeq protein sequence ID" value="NP_001368.2"/>
</dbReference>
<dbReference type="UCSC" id="uc001phn.2">
    <molecule id="Q8NCM8-1"/>
    <property type="organism name" value="human"/>
</dbReference>
<dbReference type="AGR" id="HGNC:2962"/>
<dbReference type="CTD" id="79659"/>
<dbReference type="DisGeNET" id="79659"/>
<dbReference type="GeneCards" id="DYNC2H1"/>
<dbReference type="GeneReviews" id="DYNC2H1"/>
<dbReference type="HGNC" id="HGNC:2962">
    <property type="gene designation" value="DYNC2H1"/>
</dbReference>
<dbReference type="HPA" id="ENSG00000187240">
    <property type="expression patterns" value="Tissue enhanced (choroid)"/>
</dbReference>
<dbReference type="MalaCards" id="DYNC2H1"/>
<dbReference type="MIM" id="603297">
    <property type="type" value="gene"/>
</dbReference>
<dbReference type="MIM" id="613091">
    <property type="type" value="phenotype"/>
</dbReference>
<dbReference type="neXtProt" id="NX_Q8NCM8"/>
<dbReference type="OpenTargets" id="ENSG00000187240"/>
<dbReference type="Orphanet" id="474">
    <property type="disease" value="Jeune syndrome"/>
</dbReference>
<dbReference type="Orphanet" id="93269">
    <property type="disease" value="Short rib-polydactyly syndrome, Majewski type"/>
</dbReference>
<dbReference type="Orphanet" id="93270">
    <property type="disease" value="Short rib-polydactyly syndrome, Saldino-Noonan type"/>
</dbReference>
<dbReference type="Orphanet" id="93271">
    <property type="disease" value="Short rib-polydactyly syndrome, Verma-Naumoff type"/>
</dbReference>
<dbReference type="VEuPathDB" id="HostDB:ENSG00000187240"/>
<dbReference type="eggNOG" id="KOG3595">
    <property type="taxonomic scope" value="Eukaryota"/>
</dbReference>
<dbReference type="GeneTree" id="ENSGT00940000154620"/>
<dbReference type="HOGENOM" id="CLU_000038_7_2_1"/>
<dbReference type="InParanoid" id="Q8NCM8"/>
<dbReference type="OMA" id="WCKERVS"/>
<dbReference type="OrthoDB" id="10252139at2759"/>
<dbReference type="PAN-GO" id="Q8NCM8">
    <property type="GO annotations" value="7 GO annotations based on evolutionary models"/>
</dbReference>
<dbReference type="PhylomeDB" id="Q8NCM8"/>
<dbReference type="TreeFam" id="TF315251"/>
<dbReference type="PathwayCommons" id="Q8NCM8"/>
<dbReference type="Reactome" id="R-HSA-5610787">
    <property type="pathway name" value="Hedgehog 'off' state"/>
</dbReference>
<dbReference type="Reactome" id="R-HSA-5620924">
    <property type="pathway name" value="Intraflagellar transport"/>
</dbReference>
<dbReference type="SignaLink" id="Q8NCM8"/>
<dbReference type="BioGRID-ORCS" id="79659">
    <property type="hits" value="16 hits in 1156 CRISPR screens"/>
</dbReference>
<dbReference type="ChiTaRS" id="DYNC2H1">
    <property type="organism name" value="human"/>
</dbReference>
<dbReference type="EvolutionaryTrace" id="Q8NCM8"/>
<dbReference type="GeneWiki" id="DYNC2H1"/>
<dbReference type="GenomeRNAi" id="79659"/>
<dbReference type="Pharos" id="Q8NCM8">
    <property type="development level" value="Tbio"/>
</dbReference>
<dbReference type="PRO" id="PR:Q8NCM8"/>
<dbReference type="Proteomes" id="UP000005640">
    <property type="component" value="Chromosome 11"/>
</dbReference>
<dbReference type="RNAct" id="Q8NCM8">
    <property type="molecule type" value="protein"/>
</dbReference>
<dbReference type="Bgee" id="ENSG00000187240">
    <property type="expression patterns" value="Expressed in secondary oocyte and 148 other cell types or tissues"/>
</dbReference>
<dbReference type="ExpressionAtlas" id="Q8NCM8">
    <property type="expression patterns" value="baseline and differential"/>
</dbReference>
<dbReference type="GO" id="GO:0097729">
    <property type="term" value="C:9+2 motile cilium"/>
    <property type="evidence" value="ECO:0000318"/>
    <property type="project" value="GO_Central"/>
</dbReference>
<dbReference type="GO" id="GO:0045177">
    <property type="term" value="C:apical part of cell"/>
    <property type="evidence" value="ECO:0007669"/>
    <property type="project" value="Ensembl"/>
</dbReference>
<dbReference type="GO" id="GO:0005930">
    <property type="term" value="C:axoneme"/>
    <property type="evidence" value="ECO:0000318"/>
    <property type="project" value="GO_Central"/>
</dbReference>
<dbReference type="GO" id="GO:0097542">
    <property type="term" value="C:ciliary tip"/>
    <property type="evidence" value="ECO:0000304"/>
    <property type="project" value="Reactome"/>
</dbReference>
<dbReference type="GO" id="GO:0005929">
    <property type="term" value="C:cilium"/>
    <property type="evidence" value="ECO:0000304"/>
    <property type="project" value="Reactome"/>
</dbReference>
<dbReference type="GO" id="GO:0005868">
    <property type="term" value="C:cytoplasmic dynein complex"/>
    <property type="evidence" value="ECO:0000314"/>
    <property type="project" value="GO_Central"/>
</dbReference>
<dbReference type="GO" id="GO:0070062">
    <property type="term" value="C:extracellular exosome"/>
    <property type="evidence" value="ECO:0007005"/>
    <property type="project" value="UniProtKB"/>
</dbReference>
<dbReference type="GO" id="GO:0005794">
    <property type="term" value="C:Golgi apparatus"/>
    <property type="evidence" value="ECO:0000314"/>
    <property type="project" value="UniProtKB"/>
</dbReference>
<dbReference type="GO" id="GO:0005874">
    <property type="term" value="C:microtubule"/>
    <property type="evidence" value="ECO:0000314"/>
    <property type="project" value="UniProtKB"/>
</dbReference>
<dbReference type="GO" id="GO:0005886">
    <property type="term" value="C:plasma membrane"/>
    <property type="evidence" value="ECO:0007669"/>
    <property type="project" value="UniProtKB-SubCell"/>
</dbReference>
<dbReference type="GO" id="GO:0005524">
    <property type="term" value="F:ATP binding"/>
    <property type="evidence" value="ECO:0007669"/>
    <property type="project" value="UniProtKB-KW"/>
</dbReference>
<dbReference type="GO" id="GO:0016887">
    <property type="term" value="F:ATP hydrolysis activity"/>
    <property type="evidence" value="ECO:0007669"/>
    <property type="project" value="InterPro"/>
</dbReference>
<dbReference type="GO" id="GO:0003774">
    <property type="term" value="F:cytoskeletal motor activity"/>
    <property type="evidence" value="ECO:0000303"/>
    <property type="project" value="UniProtKB"/>
</dbReference>
<dbReference type="GO" id="GO:0045505">
    <property type="term" value="F:dynein intermediate chain binding"/>
    <property type="evidence" value="ECO:0000318"/>
    <property type="project" value="GO_Central"/>
</dbReference>
<dbReference type="GO" id="GO:0051959">
    <property type="term" value="F:dynein light intermediate chain binding"/>
    <property type="evidence" value="ECO:0000318"/>
    <property type="project" value="GO_Central"/>
</dbReference>
<dbReference type="GO" id="GO:0008569">
    <property type="term" value="F:minus-end-directed microtubule motor activity"/>
    <property type="evidence" value="ECO:0007669"/>
    <property type="project" value="InterPro"/>
</dbReference>
<dbReference type="GO" id="GO:0060271">
    <property type="term" value="P:cilium assembly"/>
    <property type="evidence" value="ECO:0000318"/>
    <property type="project" value="GO_Central"/>
</dbReference>
<dbReference type="GO" id="GO:0060294">
    <property type="term" value="P:cilium movement involved in cell motility"/>
    <property type="evidence" value="ECO:0000318"/>
    <property type="project" value="GO_Central"/>
</dbReference>
<dbReference type="GO" id="GO:0060976">
    <property type="term" value="P:coronary vasculature development"/>
    <property type="evidence" value="ECO:0007669"/>
    <property type="project" value="Ensembl"/>
</dbReference>
<dbReference type="GO" id="GO:0007368">
    <property type="term" value="P:determination of left/right symmetry"/>
    <property type="evidence" value="ECO:0007669"/>
    <property type="project" value="Ensembl"/>
</dbReference>
<dbReference type="GO" id="GO:0009953">
    <property type="term" value="P:dorsal/ventral pattern formation"/>
    <property type="evidence" value="ECO:0007669"/>
    <property type="project" value="Ensembl"/>
</dbReference>
<dbReference type="GO" id="GO:0030326">
    <property type="term" value="P:embryonic limb morphogenesis"/>
    <property type="evidence" value="ECO:0007669"/>
    <property type="project" value="Ensembl"/>
</dbReference>
<dbReference type="GO" id="GO:0030900">
    <property type="term" value="P:forebrain development"/>
    <property type="evidence" value="ECO:0007669"/>
    <property type="project" value="Ensembl"/>
</dbReference>
<dbReference type="GO" id="GO:0007030">
    <property type="term" value="P:Golgi organization"/>
    <property type="evidence" value="ECO:0000314"/>
    <property type="project" value="UniProtKB"/>
</dbReference>
<dbReference type="GO" id="GO:0035721">
    <property type="term" value="P:intraciliary retrograde transport"/>
    <property type="evidence" value="ECO:0000318"/>
    <property type="project" value="GO_Central"/>
</dbReference>
<dbReference type="GO" id="GO:0001822">
    <property type="term" value="P:kidney development"/>
    <property type="evidence" value="ECO:0007669"/>
    <property type="project" value="Ensembl"/>
</dbReference>
<dbReference type="GO" id="GO:1905515">
    <property type="term" value="P:non-motile cilium assembly"/>
    <property type="evidence" value="ECO:0007669"/>
    <property type="project" value="Ensembl"/>
</dbReference>
<dbReference type="GO" id="GO:0045880">
    <property type="term" value="P:positive regulation of smoothened signaling pathway"/>
    <property type="evidence" value="ECO:0007669"/>
    <property type="project" value="Ensembl"/>
</dbReference>
<dbReference type="GO" id="GO:0061512">
    <property type="term" value="P:protein localization to cilium"/>
    <property type="evidence" value="ECO:0007669"/>
    <property type="project" value="Ensembl"/>
</dbReference>
<dbReference type="GO" id="GO:0016485">
    <property type="term" value="P:protein processing"/>
    <property type="evidence" value="ECO:0007669"/>
    <property type="project" value="Ensembl"/>
</dbReference>
<dbReference type="GO" id="GO:0021522">
    <property type="term" value="P:spinal cord motor neuron differentiation"/>
    <property type="evidence" value="ECO:0007669"/>
    <property type="project" value="Ensembl"/>
</dbReference>
<dbReference type="FunFam" id="1.20.920.20:FF:000002">
    <property type="entry name" value="Cytoplasmic dynein 1 heavy chain"/>
    <property type="match status" value="1"/>
</dbReference>
<dbReference type="FunFam" id="1.20.920.30:FF:000006">
    <property type="entry name" value="Cytoplasmic dynein 2 heavy chain 1"/>
    <property type="match status" value="1"/>
</dbReference>
<dbReference type="FunFam" id="3.40.50.300:FF:000706">
    <property type="entry name" value="Cytoplasmic dynein 2 heavy chain 1"/>
    <property type="match status" value="1"/>
</dbReference>
<dbReference type="FunFam" id="3.40.50.300:FF:000710">
    <property type="entry name" value="Cytoplasmic dynein 2 heavy chain 1"/>
    <property type="match status" value="1"/>
</dbReference>
<dbReference type="FunFam" id="3.40.50.300:FF:001810">
    <property type="entry name" value="Cytoplasmic dynein 2 heavy chain 1"/>
    <property type="match status" value="1"/>
</dbReference>
<dbReference type="FunFam" id="3.40.50.300:FF:002654">
    <property type="entry name" value="Cytoplasmic dynein 2 heavy chain 1"/>
    <property type="match status" value="1"/>
</dbReference>
<dbReference type="FunFam" id="1.10.8.710:FF:000006">
    <property type="entry name" value="cytoplasmic dynein 2 heavy chain 1"/>
    <property type="match status" value="1"/>
</dbReference>
<dbReference type="FunFam" id="1.10.8.720:FF:000006">
    <property type="entry name" value="cytoplasmic dynein 2 heavy chain 1"/>
    <property type="match status" value="1"/>
</dbReference>
<dbReference type="FunFam" id="1.20.140.100:FF:000005">
    <property type="entry name" value="cytoplasmic dynein 2 heavy chain 1"/>
    <property type="match status" value="1"/>
</dbReference>
<dbReference type="FunFam" id="1.20.58.1120:FF:000006">
    <property type="entry name" value="cytoplasmic dynein 2 heavy chain 1"/>
    <property type="match status" value="1"/>
</dbReference>
<dbReference type="FunFam" id="3.20.180.20:FF:000002">
    <property type="entry name" value="Cytoplasmic dynein heavy chain 1"/>
    <property type="match status" value="1"/>
</dbReference>
<dbReference type="FunFam" id="3.40.50.300:FF:000071">
    <property type="entry name" value="Cytoplasmic dynein heavy chain 1"/>
    <property type="match status" value="1"/>
</dbReference>
<dbReference type="FunFam" id="1.10.8.1220:FF:000003">
    <property type="entry name" value="Dynein cytoplasmic 2 heavy chain 1"/>
    <property type="match status" value="1"/>
</dbReference>
<dbReference type="FunFam" id="1.20.1270.280:FF:000006">
    <property type="entry name" value="Dynein cytoplasmic 2 heavy chain 1"/>
    <property type="match status" value="1"/>
</dbReference>
<dbReference type="FunFam" id="3.10.490.20:FF:000007">
    <property type="entry name" value="Dynein cytoplasmic 2 heavy chain 1"/>
    <property type="match status" value="1"/>
</dbReference>
<dbReference type="FunFam" id="3.40.50.300:FF:000598">
    <property type="entry name" value="Dynein cytoplasmic 2 heavy chain 1"/>
    <property type="match status" value="1"/>
</dbReference>
<dbReference type="Gene3D" id="1.10.8.1220">
    <property type="match status" value="1"/>
</dbReference>
<dbReference type="Gene3D" id="1.10.8.710">
    <property type="match status" value="1"/>
</dbReference>
<dbReference type="Gene3D" id="1.20.1270.280">
    <property type="match status" value="1"/>
</dbReference>
<dbReference type="Gene3D" id="1.20.58.1120">
    <property type="match status" value="1"/>
</dbReference>
<dbReference type="Gene3D" id="1.20.920.20">
    <property type="match status" value="1"/>
</dbReference>
<dbReference type="Gene3D" id="1.20.920.30">
    <property type="match status" value="1"/>
</dbReference>
<dbReference type="Gene3D" id="3.10.490.20">
    <property type="match status" value="1"/>
</dbReference>
<dbReference type="Gene3D" id="6.10.140.1060">
    <property type="match status" value="1"/>
</dbReference>
<dbReference type="Gene3D" id="1.20.140.100">
    <property type="entry name" value="Dynein heavy chain, N-terminal domain 2"/>
    <property type="match status" value="1"/>
</dbReference>
<dbReference type="Gene3D" id="3.20.180.20">
    <property type="entry name" value="Dynein heavy chain, N-terminal domain 2"/>
    <property type="match status" value="1"/>
</dbReference>
<dbReference type="Gene3D" id="3.40.50.300">
    <property type="entry name" value="P-loop containing nucleotide triphosphate hydrolases"/>
    <property type="match status" value="5"/>
</dbReference>
<dbReference type="Gene3D" id="1.10.8.720">
    <property type="entry name" value="Region D6 of dynein motor"/>
    <property type="match status" value="1"/>
</dbReference>
<dbReference type="InterPro" id="IPR003593">
    <property type="entry name" value="AAA+_ATPase"/>
</dbReference>
<dbReference type="InterPro" id="IPR035699">
    <property type="entry name" value="AAA_6"/>
</dbReference>
<dbReference type="InterPro" id="IPR035706">
    <property type="entry name" value="AAA_9"/>
</dbReference>
<dbReference type="InterPro" id="IPR041658">
    <property type="entry name" value="AAA_lid_11"/>
</dbReference>
<dbReference type="InterPro" id="IPR042219">
    <property type="entry name" value="AAA_lid_11_sf"/>
</dbReference>
<dbReference type="InterPro" id="IPR026983">
    <property type="entry name" value="DHC"/>
</dbReference>
<dbReference type="InterPro" id="IPR054354">
    <property type="entry name" value="DYNC2H1-like_lid"/>
</dbReference>
<dbReference type="InterPro" id="IPR049400">
    <property type="entry name" value="DYNC2H1_AAA_dom"/>
</dbReference>
<dbReference type="InterPro" id="IPR042222">
    <property type="entry name" value="Dynein_2_N"/>
</dbReference>
<dbReference type="InterPro" id="IPR043157">
    <property type="entry name" value="Dynein_AAA1S"/>
</dbReference>
<dbReference type="InterPro" id="IPR041228">
    <property type="entry name" value="Dynein_C"/>
</dbReference>
<dbReference type="InterPro" id="IPR043160">
    <property type="entry name" value="Dynein_C_barrel"/>
</dbReference>
<dbReference type="InterPro" id="IPR024743">
    <property type="entry name" value="Dynein_HC_stalk"/>
</dbReference>
<dbReference type="InterPro" id="IPR024317">
    <property type="entry name" value="Dynein_heavy_chain_D4_dom"/>
</dbReference>
<dbReference type="InterPro" id="IPR004273">
    <property type="entry name" value="Dynein_heavy_D6_P-loop"/>
</dbReference>
<dbReference type="InterPro" id="IPR013602">
    <property type="entry name" value="Dynein_heavy_linker"/>
</dbReference>
<dbReference type="InterPro" id="IPR013594">
    <property type="entry name" value="Dynein_heavy_tail"/>
</dbReference>
<dbReference type="InterPro" id="IPR042228">
    <property type="entry name" value="Dynein_linker_3"/>
</dbReference>
<dbReference type="InterPro" id="IPR027417">
    <property type="entry name" value="P-loop_NTPase"/>
</dbReference>
<dbReference type="PANTHER" id="PTHR46532:SF15">
    <property type="entry name" value="CYTOPLASMIC DYNEIN 2 HEAVY CHAIN 1"/>
    <property type="match status" value="1"/>
</dbReference>
<dbReference type="PANTHER" id="PTHR46532">
    <property type="entry name" value="MALE FERTILITY FACTOR KL5"/>
    <property type="match status" value="1"/>
</dbReference>
<dbReference type="Pfam" id="PF12774">
    <property type="entry name" value="AAA_6"/>
    <property type="match status" value="1"/>
</dbReference>
<dbReference type="Pfam" id="PF12775">
    <property type="entry name" value="AAA_7"/>
    <property type="match status" value="1"/>
</dbReference>
<dbReference type="Pfam" id="PF12780">
    <property type="entry name" value="AAA_8"/>
    <property type="match status" value="1"/>
</dbReference>
<dbReference type="Pfam" id="PF12781">
    <property type="entry name" value="AAA_9"/>
    <property type="match status" value="1"/>
</dbReference>
<dbReference type="Pfam" id="PF18198">
    <property type="entry name" value="AAA_lid_11"/>
    <property type="match status" value="1"/>
</dbReference>
<dbReference type="Pfam" id="PF08385">
    <property type="entry name" value="DHC_N1"/>
    <property type="match status" value="1"/>
</dbReference>
<dbReference type="Pfam" id="PF08393">
    <property type="entry name" value="DHC_N2"/>
    <property type="match status" value="1"/>
</dbReference>
<dbReference type="Pfam" id="PF22597">
    <property type="entry name" value="DYN_lid"/>
    <property type="match status" value="1"/>
</dbReference>
<dbReference type="Pfam" id="PF21264">
    <property type="entry name" value="DYNC2H1_AAA_dom"/>
    <property type="match status" value="1"/>
</dbReference>
<dbReference type="Pfam" id="PF18199">
    <property type="entry name" value="Dynein_C"/>
    <property type="match status" value="1"/>
</dbReference>
<dbReference type="Pfam" id="PF03028">
    <property type="entry name" value="Dynein_heavy"/>
    <property type="match status" value="1"/>
</dbReference>
<dbReference type="Pfam" id="PF12777">
    <property type="entry name" value="MT"/>
    <property type="match status" value="1"/>
</dbReference>
<dbReference type="SMART" id="SM00382">
    <property type="entry name" value="AAA"/>
    <property type="match status" value="3"/>
</dbReference>
<dbReference type="SUPFAM" id="SSF52540">
    <property type="entry name" value="P-loop containing nucleoside triphosphate hydrolases"/>
    <property type="match status" value="4"/>
</dbReference>
<name>DYHC2_HUMAN</name>
<protein>
    <recommendedName>
        <fullName>Cytoplasmic dynein 2 heavy chain 1</fullName>
    </recommendedName>
    <alternativeName>
        <fullName>Cytoplasmic dynein 2 heavy chain</fullName>
    </alternativeName>
    <alternativeName>
        <fullName>Dynein cytoplasmic heavy chain 2</fullName>
    </alternativeName>
    <alternativeName>
        <fullName>Dynein heavy chain 11</fullName>
        <shortName>hDHC11</shortName>
    </alternativeName>
    <alternativeName>
        <fullName>Dynein heavy chain isotype 1B</fullName>
    </alternativeName>
</protein>
<comment type="function">
    <text evidence="1">May function as a motor for intraflagellar retrograde transport. Functions in cilia biogenesis. May play a role in transport between endoplasmic reticulum and Golgi or organization of the Golgi in cells (By similarity).</text>
</comment>
<comment type="subunit">
    <text evidence="1">The cytoplasmic dynein complex 2 is probably composed by a heavy chain DYNC2H1 homodimer and a number of DYNC2LI1 light intermediate chains.</text>
</comment>
<comment type="subcellular location">
    <subcellularLocation>
        <location evidence="3">Cytoplasm</location>
        <location evidence="3">Cytoskeleton</location>
        <location evidence="3">Cilium axoneme</location>
    </subcellularLocation>
    <subcellularLocation>
        <location evidence="2">Cell membrane</location>
        <topology evidence="2">Peripheral membrane protein</topology>
    </subcellularLocation>
    <subcellularLocation>
        <location evidence="3">Cytoplasm</location>
    </subcellularLocation>
    <text evidence="3 12">Localizes to the apical cytoplasm (By similarity). According to PubMed:8666668, it localizes to Golgi apparatus, cytoplasmic vesicle and endoplasmic reticulum (PubMed:8666668).</text>
</comment>
<comment type="alternative products">
    <event type="alternative splicing"/>
    <isoform>
        <id>Q8NCM8-1</id>
        <name>1</name>
        <sequence type="displayed"/>
    </isoform>
    <isoform>
        <id>Q8NCM8-2</id>
        <name>2</name>
        <sequence type="described" ref="VSP_031283"/>
    </isoform>
    <isoform>
        <id>Q8NCM8-3</id>
        <name>3</name>
        <sequence type="described" ref="VSP_031282"/>
    </isoform>
</comment>
<comment type="disease" evidence="7 8 10 11">
    <disease id="DI-02583">
        <name>Short-rib thoracic dysplasia 3 with or without polydactyly</name>
        <acronym>SRTD3</acronym>
        <description>A form of short-rib thoracic dysplasia, a group of autosomal recessive ciliopathies that are characterized by a constricted thoracic cage, short ribs, shortened tubular bones, and a 'trident' appearance of the acetabular roof. Polydactyly is variably present. Non-skeletal involvement can include cleft lip/palate as well as anomalies of major organs such as the brain, eye, heart, kidneys, liver, pancreas, intestines, and genitalia. Some forms of the disease are lethal in the neonatal period due to respiratory insufficiency secondary to a severely restricted thoracic cage, whereas others are compatible with life. Disease spectrum encompasses Ellis-van Creveld syndrome, asphyxiating thoracic dystrophy (Jeune syndrome), Mainzer-Saldino syndrome, and short rib-polydactyly syndrome.</description>
        <dbReference type="MIM" id="613091"/>
    </disease>
    <text evidence="9">The disease is caused by variants affecting the gene represented in this entry. In some cases DYNC2H1 mutations result in disease phenotype in the presence of mutations in NEK1 indicating digenic inheritance (digenic short rib-polydactyly syndrome 3/6 with polydactyly) (PubMed:21211617).</text>
</comment>
<comment type="similarity">
    <text evidence="15">Belongs to the dynein heavy chain family.</text>
</comment>
<comment type="sequence caution" evidence="15">
    <conflict type="erroneous initiation">
        <sequence resource="EMBL-CDS" id="BAB13905"/>
    </conflict>
    <text>Truncated N-terminus.</text>
</comment>
<comment type="sequence caution" evidence="15">
    <conflict type="erroneous initiation">
        <sequence resource="EMBL-CDS" id="BAC04578"/>
    </conflict>
    <text>Truncated N-terminus.</text>
</comment>
<comment type="sequence caution" evidence="15">
    <conflict type="erroneous initiation">
        <sequence resource="EMBL-CDS" id="BAD18598"/>
    </conflict>
    <text>Truncated N-terminus.</text>
</comment>
<keyword id="KW-0002">3D-structure</keyword>
<keyword id="KW-0025">Alternative splicing</keyword>
<keyword id="KW-0067">ATP-binding</keyword>
<keyword id="KW-1003">Cell membrane</keyword>
<keyword id="KW-0966">Cell projection</keyword>
<keyword id="KW-1186">Ciliopathy</keyword>
<keyword id="KW-0969">Cilium</keyword>
<keyword id="KW-0970">Cilium biogenesis/degradation</keyword>
<keyword id="KW-0175">Coiled coil</keyword>
<keyword id="KW-0963">Cytoplasm</keyword>
<keyword id="KW-0206">Cytoskeleton</keyword>
<keyword id="KW-0217">Developmental protein</keyword>
<keyword id="KW-0225">Disease variant</keyword>
<keyword id="KW-0243">Dynein</keyword>
<keyword id="KW-0472">Membrane</keyword>
<keyword id="KW-0493">Microtubule</keyword>
<keyword id="KW-0505">Motor protein</keyword>
<keyword id="KW-0547">Nucleotide-binding</keyword>
<keyword id="KW-1267">Proteomics identification</keyword>
<keyword id="KW-1185">Reference proteome</keyword>
<reference key="1">
    <citation type="submission" date="2005-08" db="EMBL/GenBank/DDBJ databases">
        <title>Identification of novel human genes predicted by combining multiple gene finders.</title>
        <authorList>
            <person name="Totoki Y."/>
            <person name="Yada T."/>
            <person name="Sakaki Y."/>
            <person name="Takeda T."/>
        </authorList>
    </citation>
    <scope>NUCLEOTIDE SEQUENCE [LARGE SCALE MRNA] (ISOFORM 3)</scope>
    <scope>NUCLEOTIDE SEQUENCE [LARGE SCALE MRNA] OF 1911-2004 (ISOFORM 1)</scope>
</reference>
<reference key="2">
    <citation type="journal article" date="2006" name="Nature">
        <title>Human chromosome 11 DNA sequence and analysis including novel gene identification.</title>
        <authorList>
            <person name="Taylor T.D."/>
            <person name="Noguchi H."/>
            <person name="Totoki Y."/>
            <person name="Toyoda A."/>
            <person name="Kuroki Y."/>
            <person name="Dewar K."/>
            <person name="Lloyd C."/>
            <person name="Itoh T."/>
            <person name="Takeda T."/>
            <person name="Kim D.-W."/>
            <person name="She X."/>
            <person name="Barlow K.F."/>
            <person name="Bloom T."/>
            <person name="Bruford E."/>
            <person name="Chang J.L."/>
            <person name="Cuomo C.A."/>
            <person name="Eichler E."/>
            <person name="FitzGerald M.G."/>
            <person name="Jaffe D.B."/>
            <person name="LaButti K."/>
            <person name="Nicol R."/>
            <person name="Park H.-S."/>
            <person name="Seaman C."/>
            <person name="Sougnez C."/>
            <person name="Yang X."/>
            <person name="Zimmer A.R."/>
            <person name="Zody M.C."/>
            <person name="Birren B.W."/>
            <person name="Nusbaum C."/>
            <person name="Fujiyama A."/>
            <person name="Hattori M."/>
            <person name="Rogers J."/>
            <person name="Lander E.S."/>
            <person name="Sakaki Y."/>
        </authorList>
    </citation>
    <scope>NUCLEOTIDE SEQUENCE [LARGE SCALE GENOMIC DNA]</scope>
</reference>
<reference key="3">
    <citation type="journal article" date="2004" name="Nat. Genet.">
        <title>Complete sequencing and characterization of 21,243 full-length human cDNAs.</title>
        <authorList>
            <person name="Ota T."/>
            <person name="Suzuki Y."/>
            <person name="Nishikawa T."/>
            <person name="Otsuki T."/>
            <person name="Sugiyama T."/>
            <person name="Irie R."/>
            <person name="Wakamatsu A."/>
            <person name="Hayashi K."/>
            <person name="Sato H."/>
            <person name="Nagai K."/>
            <person name="Kimura K."/>
            <person name="Makita H."/>
            <person name="Sekine M."/>
            <person name="Obayashi M."/>
            <person name="Nishi T."/>
            <person name="Shibahara T."/>
            <person name="Tanaka T."/>
            <person name="Ishii S."/>
            <person name="Yamamoto J."/>
            <person name="Saito K."/>
            <person name="Kawai Y."/>
            <person name="Isono Y."/>
            <person name="Nakamura Y."/>
            <person name="Nagahari K."/>
            <person name="Murakami K."/>
            <person name="Yasuda T."/>
            <person name="Iwayanagi T."/>
            <person name="Wagatsuma M."/>
            <person name="Shiratori A."/>
            <person name="Sudo H."/>
            <person name="Hosoiri T."/>
            <person name="Kaku Y."/>
            <person name="Kodaira H."/>
            <person name="Kondo H."/>
            <person name="Sugawara M."/>
            <person name="Takahashi M."/>
            <person name="Kanda K."/>
            <person name="Yokoi T."/>
            <person name="Furuya T."/>
            <person name="Kikkawa E."/>
            <person name="Omura Y."/>
            <person name="Abe K."/>
            <person name="Kamihara K."/>
            <person name="Katsuta N."/>
            <person name="Sato K."/>
            <person name="Tanikawa M."/>
            <person name="Yamazaki M."/>
            <person name="Ninomiya K."/>
            <person name="Ishibashi T."/>
            <person name="Yamashita H."/>
            <person name="Murakawa K."/>
            <person name="Fujimori K."/>
            <person name="Tanai H."/>
            <person name="Kimata M."/>
            <person name="Watanabe M."/>
            <person name="Hiraoka S."/>
            <person name="Chiba Y."/>
            <person name="Ishida S."/>
            <person name="Ono Y."/>
            <person name="Takiguchi S."/>
            <person name="Watanabe S."/>
            <person name="Yosida M."/>
            <person name="Hotuta T."/>
            <person name="Kusano J."/>
            <person name="Kanehori K."/>
            <person name="Takahashi-Fujii A."/>
            <person name="Hara H."/>
            <person name="Tanase T.-O."/>
            <person name="Nomura Y."/>
            <person name="Togiya S."/>
            <person name="Komai F."/>
            <person name="Hara R."/>
            <person name="Takeuchi K."/>
            <person name="Arita M."/>
            <person name="Imose N."/>
            <person name="Musashino K."/>
            <person name="Yuuki H."/>
            <person name="Oshima A."/>
            <person name="Sasaki N."/>
            <person name="Aotsuka S."/>
            <person name="Yoshikawa Y."/>
            <person name="Matsunawa H."/>
            <person name="Ichihara T."/>
            <person name="Shiohata N."/>
            <person name="Sano S."/>
            <person name="Moriya S."/>
            <person name="Momiyama H."/>
            <person name="Satoh N."/>
            <person name="Takami S."/>
            <person name="Terashima Y."/>
            <person name="Suzuki O."/>
            <person name="Nakagawa S."/>
            <person name="Senoh A."/>
            <person name="Mizoguchi H."/>
            <person name="Goto Y."/>
            <person name="Shimizu F."/>
            <person name="Wakebe H."/>
            <person name="Hishigaki H."/>
            <person name="Watanabe T."/>
            <person name="Sugiyama A."/>
            <person name="Takemoto M."/>
            <person name="Kawakami B."/>
            <person name="Yamazaki M."/>
            <person name="Watanabe K."/>
            <person name="Kumagai A."/>
            <person name="Itakura S."/>
            <person name="Fukuzumi Y."/>
            <person name="Fujimori Y."/>
            <person name="Komiyama M."/>
            <person name="Tashiro H."/>
            <person name="Tanigami A."/>
            <person name="Fujiwara T."/>
            <person name="Ono T."/>
            <person name="Yamada K."/>
            <person name="Fujii Y."/>
            <person name="Ozaki K."/>
            <person name="Hirao M."/>
            <person name="Ohmori Y."/>
            <person name="Kawabata A."/>
            <person name="Hikiji T."/>
            <person name="Kobatake N."/>
            <person name="Inagaki H."/>
            <person name="Ikema Y."/>
            <person name="Okamoto S."/>
            <person name="Okitani R."/>
            <person name="Kawakami T."/>
            <person name="Noguchi S."/>
            <person name="Itoh T."/>
            <person name="Shigeta K."/>
            <person name="Senba T."/>
            <person name="Matsumura K."/>
            <person name="Nakajima Y."/>
            <person name="Mizuno T."/>
            <person name="Morinaga M."/>
            <person name="Sasaki M."/>
            <person name="Togashi T."/>
            <person name="Oyama M."/>
            <person name="Hata H."/>
            <person name="Watanabe M."/>
            <person name="Komatsu T."/>
            <person name="Mizushima-Sugano J."/>
            <person name="Satoh T."/>
            <person name="Shirai Y."/>
            <person name="Takahashi Y."/>
            <person name="Nakagawa K."/>
            <person name="Okumura K."/>
            <person name="Nagase T."/>
            <person name="Nomura N."/>
            <person name="Kikuchi H."/>
            <person name="Masuho Y."/>
            <person name="Yamashita R."/>
            <person name="Nakai K."/>
            <person name="Yada T."/>
            <person name="Nakamura Y."/>
            <person name="Ohara O."/>
            <person name="Isogai T."/>
            <person name="Sugano S."/>
        </authorList>
    </citation>
    <scope>NUCLEOTIDE SEQUENCE [LARGE SCALE MRNA] OF 1-1088 AND 2955-4307 (ISOFORM 1)</scope>
    <source>
        <tissue>Brain</tissue>
        <tissue>Embryo</tissue>
        <tissue>Placenta</tissue>
        <tissue>Testis</tissue>
    </source>
</reference>
<reference key="4">
    <citation type="journal article" date="1996" name="J. Cell Biol.">
        <title>Mammalian cells express three distinct dynein heavy chains that are localized to different cytoplasmic organelles.</title>
        <authorList>
            <person name="Vaisberg E.A."/>
            <person name="Grissom P.M."/>
            <person name="McIntosh J.R."/>
        </authorList>
    </citation>
    <scope>NUCLEOTIDE SEQUENCE [MRNA] OF 1091-1745 (ISOFORM 1)</scope>
    <scope>VARIANT ARG-1413</scope>
    <scope>TOPOLOGY</scope>
    <scope>SUBCELLULAR LOCATION</scope>
</reference>
<reference key="5">
    <citation type="journal article" date="1994" name="Mol. Biol. Cell">
        <title>Phylogeny and expression of axonemal and cytoplasmic dynein genes in sea urchins.</title>
        <authorList>
            <person name="Gibbons B.H."/>
            <person name="Asai D.J."/>
            <person name="Tang W.-J.Y."/>
            <person name="Hays T.S."/>
            <person name="Gibbons I.R."/>
        </authorList>
    </citation>
    <scope>NUCLEOTIDE SEQUENCE [MRNA] OF 1671-1831 (ISOFORM 1)</scope>
    <source>
        <tissue>Liver</tissue>
    </source>
</reference>
<reference key="6">
    <citation type="journal article" date="1997" name="Gene">
        <title>Identification of dynein heavy chain genes expressed in human and mouse testis: chromosomal localization of an axonemal dynein gene.</title>
        <authorList>
            <person name="Neesen J."/>
            <person name="Koehler M.R."/>
            <person name="Kirschner R."/>
            <person name="Steinlein C."/>
            <person name="Kreutzberger J."/>
            <person name="Engel W."/>
            <person name="Schmid M."/>
        </authorList>
    </citation>
    <scope>NUCLEOTIDE SEQUENCE [MRNA] OF 1689-1867 (ISOFORM 1)</scope>
    <source>
        <tissue>Testis</tissue>
    </source>
</reference>
<reference key="7">
    <citation type="journal article" date="2007" name="BMC Genomics">
        <title>The full-ORF clone resource of the German cDNA consortium.</title>
        <authorList>
            <person name="Bechtel S."/>
            <person name="Rosenfelder H."/>
            <person name="Duda A."/>
            <person name="Schmidt C.P."/>
            <person name="Ernst U."/>
            <person name="Wellenreuther R."/>
            <person name="Mehrle A."/>
            <person name="Schuster C."/>
            <person name="Bahr A."/>
            <person name="Bloecker H."/>
            <person name="Heubner D."/>
            <person name="Hoerlein A."/>
            <person name="Michel G."/>
            <person name="Wedler H."/>
            <person name="Koehrer K."/>
            <person name="Ottenwaelder B."/>
            <person name="Poustka A."/>
            <person name="Wiemann S."/>
            <person name="Schupp I."/>
        </authorList>
    </citation>
    <scope>NUCLEOTIDE SEQUENCE [LARGE SCALE MRNA] OF 2583-4307 (ISOFORM 2)</scope>
    <scope>VARIANT GLN-2871</scope>
    <source>
        <tissue>Retina</tissue>
    </source>
</reference>
<reference key="8">
    <citation type="journal article" date="2002" name="DNA Res.">
        <title>Characterization of size-fractionated cDNA libraries generated by the in vitro recombination-assisted method.</title>
        <authorList>
            <person name="Ohara O."/>
            <person name="Nagase T."/>
            <person name="Mitsui G."/>
            <person name="Kohga H."/>
            <person name="Kikuno R."/>
            <person name="Hiraoka S."/>
            <person name="Takahashi Y."/>
            <person name="Kitajima S."/>
            <person name="Saga Y."/>
            <person name="Koseki H."/>
        </authorList>
    </citation>
    <scope>NUCLEOTIDE SEQUENCE [LARGE SCALE MRNA] OF 2623-4307 (ISOFORM 1)</scope>
    <scope>VARIANTS GLN-2871 AND VAL-3680</scope>
    <source>
        <tissue>Brain</tissue>
    </source>
</reference>
<reference key="9">
    <citation type="submission" date="2003-04" db="EMBL/GenBank/DDBJ databases">
        <authorList>
            <person name="Ohara O."/>
            <person name="Nagase T."/>
            <person name="Yamakawa H."/>
            <person name="Kikuno R."/>
        </authorList>
    </citation>
    <scope>SEQUENCE REVISION</scope>
</reference>
<reference key="10">
    <citation type="journal article" date="2006" name="PLoS Genet.">
        <title>Genetic analysis of the cytoplasmic dynein subunit families.</title>
        <authorList>
            <person name="Pfister K.K."/>
            <person name="Shah P.R."/>
            <person name="Hummerich H."/>
            <person name="Russ A."/>
            <person name="Cotton J."/>
            <person name="Annuar A.A."/>
            <person name="King S.M."/>
            <person name="Fisher E.M.C."/>
        </authorList>
    </citation>
    <scope>NOMENCLATURE</scope>
</reference>
<reference key="11">
    <citation type="journal article" date="2011" name="Am. J. Hum. Genet.">
        <title>NEK1 mutations cause short-rib polydactyly syndrome type majewski.</title>
        <authorList>
            <person name="Thiel C."/>
            <person name="Kessler K."/>
            <person name="Giessl A."/>
            <person name="Dimmler A."/>
            <person name="Shalev S.A."/>
            <person name="von der Haar S."/>
            <person name="Zenker M."/>
            <person name="Zahnleiter D."/>
            <person name="Stoess H."/>
            <person name="Beinder E."/>
            <person name="Abou Jamra R."/>
            <person name="Ekici A.B."/>
            <person name="Schroeder-Kress N."/>
            <person name="Aigner T."/>
            <person name="Kirchner T."/>
            <person name="Reis A."/>
            <person name="Brandstaetter J.H."/>
            <person name="Rauch A."/>
        </authorList>
    </citation>
    <scope>INVOLVEMENT IN DIGENIC SHORT-RIB THORACIC DYSPLASIA 3/6 WITH POLYDACTYLY</scope>
    <scope>VARIANT ASP-3909</scope>
</reference>
<reference key="12">
    <citation type="journal article" date="2011" name="BMC Syst. Biol.">
        <title>Initial characterization of the human central proteome.</title>
        <authorList>
            <person name="Burkard T.R."/>
            <person name="Planyavsky M."/>
            <person name="Kaupe I."/>
            <person name="Breitwieser F.P."/>
            <person name="Buerckstuemmer T."/>
            <person name="Bennett K.L."/>
            <person name="Superti-Furga G."/>
            <person name="Colinge J."/>
        </authorList>
    </citation>
    <scope>IDENTIFICATION BY MASS SPECTROMETRY [LARGE SCALE ANALYSIS]</scope>
</reference>
<reference key="13">
    <citation type="journal article" date="2009" name="Am. J. Hum. Genet.">
        <title>Ciliary abnormalities due to defects in the retrograde transport protein DYNC2H1 in short-rib polydactyly syndrome.</title>
        <authorList>
            <person name="Merrill A.E."/>
            <person name="Merriman B."/>
            <person name="Farrington-Rock C."/>
            <person name="Camacho N."/>
            <person name="Sebald E.T."/>
            <person name="Funari V.A."/>
            <person name="Schibler M.J."/>
            <person name="Firestein M.H."/>
            <person name="Cohn Z.A."/>
            <person name="Priore M.A."/>
            <person name="Thompson A.K."/>
            <person name="Rimoin D.L."/>
            <person name="Nelson S.F."/>
            <person name="Cohn D.H."/>
            <person name="Krakow D."/>
        </authorList>
    </citation>
    <scope>VARIANTS SRTD3 ILE-209; CYS-587 AND HIS-2205</scope>
</reference>
<reference key="14">
    <citation type="journal article" date="2009" name="Am. J. Hum. Genet.">
        <title>DYNC2H1 mutations cause asphyxiating thoracic dystrophy and short rib-polydactyly syndrome, type III.</title>
        <authorList>
            <person name="Dagoneau N."/>
            <person name="Goulet M."/>
            <person name="Genevieve D."/>
            <person name="Sznajer Y."/>
            <person name="Martinovic J."/>
            <person name="Smithson S."/>
            <person name="Huber C."/>
            <person name="Baujat G."/>
            <person name="Flori E."/>
            <person name="Tecco L."/>
            <person name="Cavalcanti D."/>
            <person name="Delezoide A.-L."/>
            <person name="Serre V."/>
            <person name="Le Merrer M."/>
            <person name="Munnich A."/>
            <person name="Cormier-Daire V."/>
        </authorList>
    </citation>
    <scope>VARIANTS SRTD3 THR-1240; ARG-1537; ALA-1987; LEU-1991; VAL-2461; GLY-3015 AND VAL-3762</scope>
</reference>
<reference key="15">
    <citation type="journal article" date="2012" name="J. Med. Genet.">
        <title>NEK1 and DYNC2H1 are both involved in short rib polydactyly Majewski type but not in Beemer Langer cases.</title>
        <authorList>
            <person name="El Hokayem J."/>
            <person name="Huber C."/>
            <person name="Couve A."/>
            <person name="Aziza J."/>
            <person name="Baujat G."/>
            <person name="Bouvier R."/>
            <person name="Cavalcanti D.P."/>
            <person name="Collins F.A."/>
            <person name="Cordier M.P."/>
            <person name="Delezoide A.L."/>
            <person name="Gonzales M."/>
            <person name="Johnson D."/>
            <person name="Le Merrer M."/>
            <person name="Levy-Mozziconacci A."/>
            <person name="Loget P."/>
            <person name="Martin-Coignard D."/>
            <person name="Martinovic J."/>
            <person name="Mortier G.R."/>
            <person name="Perez M.J."/>
            <person name="Roume J."/>
            <person name="Scarano G."/>
            <person name="Munnich A."/>
            <person name="Cormier-Daire V."/>
        </authorList>
    </citation>
    <scope>VARIANTS SRTD3 CYS-330; GLY-338; CYS-430; ARG-495; CYS-1423; SER-2496 AND GLN-2662</scope>
</reference>
<reference key="16">
    <citation type="journal article" date="2013" name="J. Med. Genet.">
        <title>Exome sequencing identifies DYNC2H1 mutations as a common cause of asphyxiating thoracic dystrophy (Jeune syndrome) without major polydactyly, renal or retinal involvement.</title>
        <authorList>
            <person name="Schmidts M."/>
            <person name="Arts H.H."/>
            <person name="Bongers E.M."/>
            <person name="Yap Z."/>
            <person name="Oud M.M."/>
            <person name="Antony D."/>
            <person name="Duijkers L."/>
            <person name="Emes R.D."/>
            <person name="Stalker J."/>
            <person name="Yntema J.B."/>
            <person name="Plagnol V."/>
            <person name="Hoischen A."/>
            <person name="Gilissen C."/>
            <person name="Forsythe E."/>
            <person name="Lausch E."/>
            <person name="Veltman J.A."/>
            <person name="Roeleveld N."/>
            <person name="Superti-Furga A."/>
            <person name="Kutkowska-Kazmierczak A."/>
            <person name="Kamsteeg E.J."/>
            <person name="Elcioglu N."/>
            <person name="van Maarle M.C."/>
            <person name="Graul-Neumann L.M."/>
            <person name="Devriendt K."/>
            <person name="Smithson S.F."/>
            <person name="Wellesley D."/>
            <person name="Verbeek N.E."/>
            <person name="Hennekam R.C."/>
            <person name="Kayserili H."/>
            <person name="Scambler P.J."/>
            <person name="Beales P.L."/>
            <person name="Knoers N.V."/>
            <person name="Roepman R."/>
            <person name="Mitchison H.M."/>
        </authorList>
    </citation>
    <scope>VARIANTS SRTD3 CYS-330; PRO-871; ILE-1228; THR-1240; VAL-1379; ASP-1442; LYS-1991; VAL-2227; THR-2304; SER-2362; GLN-2481; TRP-2532; MET-2555; CYS-2573; THR-2640; MET-2819; GLY-3015; LEU-3381; CYS-3806; GLY-3847 AND ARG-4232</scope>
</reference>
<gene>
    <name type="primary">DYNC2H1</name>
    <name type="synonym">DHC1B</name>
    <name type="synonym">DHC2</name>
    <name type="synonym">DNCH2</name>
    <name type="synonym">DYH1B</name>
    <name type="synonym">KIAA1997</name>
</gene>
<proteinExistence type="evidence at protein level"/>
<evidence type="ECO:0000250" key="1"/>
<evidence type="ECO:0000250" key="2">
    <source>
        <dbReference type="UniProtKB" id="Q45VK7"/>
    </source>
</evidence>
<evidence type="ECO:0000250" key="3">
    <source>
        <dbReference type="UniProtKB" id="Q9JJ79"/>
    </source>
</evidence>
<evidence type="ECO:0000255" key="4"/>
<evidence type="ECO:0000269" key="5">
    <source>
    </source>
</evidence>
<evidence type="ECO:0000269" key="6">
    <source>
    </source>
</evidence>
<evidence type="ECO:0000269" key="7">
    <source>
    </source>
</evidence>
<evidence type="ECO:0000269" key="8">
    <source>
    </source>
</evidence>
<evidence type="ECO:0000269" key="9">
    <source>
    </source>
</evidence>
<evidence type="ECO:0000269" key="10">
    <source>
    </source>
</evidence>
<evidence type="ECO:0000269" key="11">
    <source>
    </source>
</evidence>
<evidence type="ECO:0000269" key="12">
    <source>
    </source>
</evidence>
<evidence type="ECO:0000303" key="13">
    <source>
    </source>
</evidence>
<evidence type="ECO:0000303" key="14">
    <source ref="1"/>
</evidence>
<evidence type="ECO:0000305" key="15"/>
<evidence type="ECO:0007829" key="16">
    <source>
        <dbReference type="PDB" id="4RH7"/>
    </source>
</evidence>
<accession>Q8NCM8</accession>
<accession>O00432</accession>
<accession>Q16693</accession>
<accession>Q3C1U8</accession>
<accession>Q4AC93</accession>
<accession>Q6ZMX7</accession>
<accession>Q6ZUM6</accession>
<accession>Q7Z363</accession>
<accession>Q8N977</accession>
<accession>Q92815</accession>
<accession>Q9HAE4</accession>
<feature type="chain" id="PRO_0000318743" description="Cytoplasmic dynein 2 heavy chain 1">
    <location>
        <begin position="1"/>
        <end position="4307"/>
    </location>
</feature>
<feature type="region of interest" description="Stem" evidence="1">
    <location>
        <begin position="1"/>
        <end position="1650"/>
    </location>
</feature>
<feature type="region of interest" description="AAA 1" evidence="1">
    <location>
        <begin position="1651"/>
        <end position="1875"/>
    </location>
</feature>
<feature type="region of interest" description="AAA 2" evidence="1">
    <location>
        <begin position="1938"/>
        <end position="2161"/>
    </location>
</feature>
<feature type="region of interest" description="AAA 3" evidence="1">
    <location>
        <begin position="2251"/>
        <end position="2505"/>
    </location>
</feature>
<feature type="region of interest" description="AAA 4" evidence="1">
    <location>
        <begin position="2617"/>
        <end position="2863"/>
    </location>
</feature>
<feature type="region of interest" description="Stalk" evidence="1">
    <location>
        <begin position="2881"/>
        <end position="3169"/>
    </location>
</feature>
<feature type="region of interest" description="AAA 5" evidence="1">
    <location>
        <begin position="3244"/>
        <end position="3473"/>
    </location>
</feature>
<feature type="region of interest" description="AAA 6" evidence="1">
    <location>
        <begin position="3690"/>
        <end position="3905"/>
    </location>
</feature>
<feature type="coiled-coil region" evidence="4">
    <location>
        <begin position="1074"/>
        <end position="1103"/>
    </location>
</feature>
<feature type="coiled-coil region" evidence="4">
    <location>
        <begin position="2897"/>
        <end position="2982"/>
    </location>
</feature>
<feature type="coiled-coil region" evidence="4">
    <location>
        <begin position="3109"/>
        <end position="3200"/>
    </location>
</feature>
<feature type="coiled-coil region" evidence="4">
    <location>
        <begin position="3408"/>
        <end position="3442"/>
    </location>
</feature>
<feature type="binding site" evidence="4">
    <location>
        <begin position="145"/>
        <end position="152"/>
    </location>
    <ligand>
        <name>ATP</name>
        <dbReference type="ChEBI" id="CHEBI:30616"/>
    </ligand>
</feature>
<feature type="binding site" evidence="4">
    <location>
        <begin position="1689"/>
        <end position="1696"/>
    </location>
    <ligand>
        <name>ATP</name>
        <dbReference type="ChEBI" id="CHEBI:30616"/>
    </ligand>
</feature>
<feature type="binding site" evidence="4">
    <location>
        <begin position="1979"/>
        <end position="1986"/>
    </location>
    <ligand>
        <name>ATP</name>
        <dbReference type="ChEBI" id="CHEBI:30616"/>
    </ligand>
</feature>
<feature type="binding site" evidence="4">
    <location>
        <begin position="2291"/>
        <end position="2298"/>
    </location>
    <ligand>
        <name>ATP</name>
        <dbReference type="ChEBI" id="CHEBI:30616"/>
    </ligand>
</feature>
<feature type="binding site" evidence="4">
    <location>
        <begin position="2655"/>
        <end position="2662"/>
    </location>
    <ligand>
        <name>ATP</name>
        <dbReference type="ChEBI" id="CHEBI:30616"/>
    </ligand>
</feature>
<feature type="splice variant" id="VSP_031282" description="In isoform 3." evidence="14">
    <location>
        <begin position="736"/>
        <end position="4122"/>
    </location>
</feature>
<feature type="splice variant" id="VSP_031283" description="In isoform 2." evidence="13">
    <original>Q</original>
    <variation>QIIGLKSW</variation>
    <location>
        <position position="3273"/>
    </location>
</feature>
<feature type="sequence variant" id="VAR_063242" description="In SRTD3; dbSNP:rs771511132." evidence="7">
    <original>F</original>
    <variation>I</variation>
    <location>
        <position position="209"/>
    </location>
</feature>
<feature type="sequence variant" id="VAR_038862" description="In dbSNP:rs12803695.">
    <original>T</original>
    <variation>P</variation>
    <location>
        <position position="302"/>
    </location>
</feature>
<feature type="sequence variant" id="VAR_038863" description="In dbSNP:rs12146610.">
    <original>Q</original>
    <variation>L</variation>
    <location>
        <position position="304"/>
    </location>
</feature>
<feature type="sequence variant" id="VAR_069591" description="In SRTD3; dbSNP:rs397514637." evidence="10 11">
    <original>R</original>
    <variation>C</variation>
    <location>
        <position position="330"/>
    </location>
</feature>
<feature type="sequence variant" id="VAR_069592" description="In SRTD3; dbSNP:rs1322077043." evidence="10">
    <original>R</original>
    <variation>G</variation>
    <location>
        <position position="338"/>
    </location>
</feature>
<feature type="sequence variant" id="VAR_038864" description="In dbSNP:rs17301182.">
    <original>H</original>
    <variation>Y</variation>
    <location>
        <position position="341"/>
    </location>
</feature>
<feature type="sequence variant" id="VAR_069593" description="In SRTD3; dbSNP:rs374073337." evidence="10">
    <original>R</original>
    <variation>C</variation>
    <location>
        <position position="430"/>
    </location>
</feature>
<feature type="sequence variant" id="VAR_038865" description="In dbSNP:rs17099969.">
    <original>R</original>
    <variation>Q</variation>
    <location>
        <position position="456"/>
    </location>
</feature>
<feature type="sequence variant" id="VAR_069594" description="In SRTD3; dbSNP:rs202233363." evidence="10">
    <original>K</original>
    <variation>R</variation>
    <location>
        <position position="495"/>
    </location>
</feature>
<feature type="sequence variant" id="VAR_063243" description="In SRTD3; dbSNP:rs137853030." evidence="7">
    <original>R</original>
    <variation>C</variation>
    <location>
        <position position="587"/>
    </location>
</feature>
<feature type="sequence variant" id="VAR_038866" description="In dbSNP:rs7358374.">
    <original>R</original>
    <variation>K</variation>
    <location>
        <position position="789"/>
    </location>
</feature>
<feature type="sequence variant" id="VAR_069595" description="In SRTD3." evidence="11">
    <original>L</original>
    <variation>P</variation>
    <location>
        <position position="871"/>
    </location>
</feature>
<feature type="sequence variant" id="VAR_038867" description="In dbSNP:rs12794914.">
    <original>R</original>
    <variation>K</variation>
    <location>
        <position position="1221"/>
    </location>
</feature>
<feature type="sequence variant" id="VAR_069596" description="In SRTD3; uncertain significance; dbSNP:rs189806840." evidence="11">
    <original>L</original>
    <variation>I</variation>
    <location>
        <position position="1228"/>
    </location>
</feature>
<feature type="sequence variant" id="VAR_063244" description="In SRTD3; dbSNP:rs137853028." evidence="8 11">
    <original>I</original>
    <variation>T</variation>
    <location>
        <position position="1240"/>
    </location>
</feature>
<feature type="sequence variant" id="VAR_038868" description="In dbSNP:rs17301750.">
    <original>T</original>
    <variation>A</variation>
    <location>
        <position position="1288"/>
    </location>
</feature>
<feature type="sequence variant" id="VAR_069597" description="In SRTD3." evidence="11">
    <original>M</original>
    <variation>V</variation>
    <location>
        <position position="1379"/>
    </location>
</feature>
<feature type="sequence variant" id="VAR_038869" description="In dbSNP:rs688906." evidence="12">
    <original>K</original>
    <variation>R</variation>
    <location>
        <position position="1413"/>
    </location>
</feature>
<feature type="sequence variant" id="VAR_069598" description="In SRTD3; dbSNP:rs745870321." evidence="10">
    <original>R</original>
    <variation>C</variation>
    <location>
        <position position="1423"/>
    </location>
</feature>
<feature type="sequence variant" id="VAR_069599" description="In SRTD3; dbSNP:rs763571787." evidence="11">
    <original>G</original>
    <variation>D</variation>
    <location>
        <position position="1442"/>
    </location>
</feature>
<feature type="sequence variant" id="VAR_063245" description="In SRTD3; dbSNP:rs137853033." evidence="8">
    <original>Q</original>
    <variation>R</variation>
    <location>
        <position position="1537"/>
    </location>
</feature>
<feature type="sequence variant" id="VAR_063246" description="In SRTD3; dbSNP:rs137853035." evidence="8">
    <original>T</original>
    <variation>A</variation>
    <location>
        <position position="1987"/>
    </location>
</feature>
<feature type="sequence variant" id="VAR_069600" description="In SRTD3; dbSNP:rs1202784860." evidence="11">
    <original>M</original>
    <variation>K</variation>
    <location>
        <position position="1991"/>
    </location>
</feature>
<feature type="sequence variant" id="VAR_063247" description="In SRTD3; dbSNP:rs137853025." evidence="8">
    <original>M</original>
    <variation>L</variation>
    <location>
        <position position="1991"/>
    </location>
</feature>
<feature type="sequence variant" id="VAR_063248" description="In SRTD3; dbSNP:rs137853031." evidence="7">
    <original>R</original>
    <variation>H</variation>
    <location>
        <position position="2205"/>
    </location>
</feature>
<feature type="sequence variant" id="VAR_069601" description="In SRTD3; dbSNP:rs750249486." evidence="11">
    <original>M</original>
    <variation>V</variation>
    <location>
        <position position="2227"/>
    </location>
</feature>
<feature type="sequence variant" id="VAR_069602" description="In SRTD3; dbSNP:rs747348765." evidence="11">
    <original>A</original>
    <variation>T</variation>
    <location>
        <position position="2304"/>
    </location>
</feature>
<feature type="sequence variant" id="VAR_069603" description="In SRTD3; dbSNP:rs1862122773." evidence="11">
    <original>N</original>
    <variation>S</variation>
    <location>
        <position position="2362"/>
    </location>
</feature>
<feature type="sequence variant" id="VAR_063249" description="In SRTD3; dbSNP:rs137853034." evidence="8">
    <original>G</original>
    <variation>V</variation>
    <location>
        <position position="2461"/>
    </location>
</feature>
<feature type="sequence variant" id="VAR_069604" description="In SRTD3; dbSNP:rs781326398." evidence="11">
    <original>R</original>
    <variation>Q</variation>
    <location>
        <position position="2481"/>
    </location>
</feature>
<feature type="sequence variant" id="VAR_069605" description="In SRTD3; dbSNP:rs397514636." evidence="10">
    <original>P</original>
    <variation>S</variation>
    <location>
        <position position="2496"/>
    </location>
</feature>
<feature type="sequence variant" id="VAR_069606" description="In SRTD3; dbSNP:rs1350329646." evidence="11">
    <original>R</original>
    <variation>W</variation>
    <location>
        <position position="2532"/>
    </location>
</feature>
<feature type="sequence variant" id="VAR_069607" description="In SRTD3; dbSNP:rs746195428." evidence="11">
    <original>V</original>
    <variation>M</variation>
    <location>
        <position position="2555"/>
    </location>
</feature>
<feature type="sequence variant" id="VAR_069608" description="In SRTD3; dbSNP:rs1278825521." evidence="11">
    <original>Y</original>
    <variation>C</variation>
    <location>
        <position position="2573"/>
    </location>
</feature>
<feature type="sequence variant" id="VAR_069609" description="In SRTD3; dbSNP:rs1265669915." evidence="11">
    <original>I</original>
    <variation>T</variation>
    <location>
        <position position="2640"/>
    </location>
</feature>
<feature type="sequence variant" id="VAR_069610" description="In SRTD3; dbSNP:rs397514635." evidence="10">
    <original>R</original>
    <variation>Q</variation>
    <location>
        <position position="2662"/>
    </location>
</feature>
<feature type="sequence variant" id="VAR_069611" description="In SRTD3; dbSNP:rs1060501431." evidence="11">
    <original>I</original>
    <variation>M</variation>
    <location>
        <position position="2819"/>
    </location>
</feature>
<feature type="sequence variant" id="VAR_038870" description="In dbSNP:rs589623." evidence="5 6">
    <original>R</original>
    <variation>Q</variation>
    <location>
        <position position="2871"/>
    </location>
</feature>
<feature type="sequence variant" id="VAR_063250" description="In SRTD3; dbSNP:rs137853027." evidence="8 11">
    <original>D</original>
    <variation>G</variation>
    <location>
        <position position="3015"/>
    </location>
</feature>
<feature type="sequence variant" id="VAR_069612" description="In SRTD3; dbSNP:rs368631447." evidence="11">
    <original>P</original>
    <variation>L</variation>
    <location>
        <position position="3381"/>
    </location>
</feature>
<feature type="sequence variant" id="VAR_038871" description="In dbSNP:rs10895391." evidence="5">
    <original>A</original>
    <variation>V</variation>
    <location>
        <position position="3680"/>
    </location>
</feature>
<feature type="sequence variant" id="VAR_063251" description="In SRTD3." evidence="8">
    <original>L</original>
    <variation>V</variation>
    <location>
        <position position="3762"/>
    </location>
</feature>
<feature type="sequence variant" id="VAR_069613" description="In SRTD3; dbSNP:rs754753584." evidence="11">
    <original>R</original>
    <variation>C</variation>
    <location>
        <position position="3806"/>
    </location>
</feature>
<feature type="sequence variant" id="VAR_069614" description="In SRTD3; dbSNP:rs752554582." evidence="11">
    <original>W</original>
    <variation>G</variation>
    <location>
        <position position="3847"/>
    </location>
</feature>
<feature type="sequence variant" id="VAR_069615" description="Found in short rib-polydactyly syndrome 3/6; uncertain significance; digenic inheritance; the patient also carries a mutation in NEK1; dbSNP:rs201479015." evidence="9">
    <original>G</original>
    <variation>D</variation>
    <location>
        <position position="3909"/>
    </location>
</feature>
<feature type="sequence variant" id="VAR_038872" description="In dbSNP:rs4754914.">
    <original>S</original>
    <variation>N</variation>
    <location>
        <position position="3976"/>
    </location>
</feature>
<feature type="sequence variant" id="VAR_038873" description="In dbSNP:rs1793493.">
    <original>Q</original>
    <variation>P</variation>
    <location>
        <position position="4139"/>
    </location>
</feature>
<feature type="sequence variant" id="VAR_069616" description="In SRTD3; dbSNP:rs1945272232." evidence="11">
    <original>L</original>
    <variation>R</variation>
    <location>
        <position position="4232"/>
    </location>
</feature>
<feature type="sequence conflict" description="In Ref. 1; BAE17138." evidence="15" ref="1">
    <original>D</original>
    <variation>G</variation>
    <location>
        <position position="174"/>
    </location>
</feature>
<feature type="sequence conflict" description="In Ref. 1; BAE17138." evidence="15" ref="1">
    <original>F</original>
    <variation>L</variation>
    <location>
        <position position="178"/>
    </location>
</feature>
<feature type="sequence conflict" description="In Ref. 1; BAE17138." evidence="15" ref="1">
    <original>F</original>
    <variation>L</variation>
    <location>
        <position position="594"/>
    </location>
</feature>
<feature type="sequence conflict" description="In Ref. 4; AAB09728." evidence="15" ref="4">
    <original>I</original>
    <variation>N</variation>
    <location>
        <position position="1120"/>
    </location>
</feature>
<feature type="sequence conflict" description="In Ref. 4; AAB09728." evidence="15" ref="4">
    <original>D</original>
    <variation>V</variation>
    <location>
        <position position="1168"/>
    </location>
</feature>
<feature type="sequence conflict" description="In Ref. 6; CAB06054." evidence="15" ref="6">
    <original>N</original>
    <variation>H</variation>
    <location>
        <position position="1784"/>
    </location>
</feature>
<feature type="sequence conflict" description="In Ref. 6; CAB06054." evidence="15" ref="6">
    <original>W</original>
    <variation>Y</variation>
    <location>
        <position position="1864"/>
    </location>
</feature>
<feature type="sequence conflict" description="In Ref. 6; CAB06054." evidence="15" ref="6">
    <original>LR</original>
    <variation>FS</variation>
    <location>
        <begin position="1866"/>
        <end position="1867"/>
    </location>
</feature>
<feature type="sequence conflict" description="In Ref. 1; BAE46899." evidence="15" ref="1">
    <original>E</original>
    <variation>K</variation>
    <location>
        <position position="1930"/>
    </location>
</feature>
<feature type="sequence conflict" description="In Ref. 7; CAD98012." evidence="15" ref="7">
    <original>A</original>
    <variation>V</variation>
    <location>
        <position position="3095"/>
    </location>
</feature>
<feature type="sequence conflict" description="In Ref. 7; CAD98012." evidence="15" ref="7">
    <original>L</original>
    <variation>P</variation>
    <location>
        <position position="3665"/>
    </location>
</feature>
<feature type="sequence conflict" description="In Ref. 3; BAB13905." evidence="15" ref="3">
    <original>C</original>
    <variation>R</variation>
    <location>
        <position position="4258"/>
    </location>
</feature>
<feature type="helix" evidence="16">
    <location>
        <begin position="1257"/>
        <end position="1273"/>
    </location>
</feature>
<feature type="strand" evidence="16">
    <location>
        <begin position="1278"/>
        <end position="1281"/>
    </location>
</feature>
<feature type="strand" evidence="16">
    <location>
        <begin position="1289"/>
        <end position="1292"/>
    </location>
</feature>
<feature type="helix" evidence="16">
    <location>
        <begin position="1295"/>
        <end position="1314"/>
    </location>
</feature>
<feature type="helix" evidence="16">
    <location>
        <begin position="1316"/>
        <end position="1321"/>
    </location>
</feature>
<feature type="helix" evidence="16">
    <location>
        <begin position="1322"/>
        <end position="1358"/>
    </location>
</feature>
<feature type="helix" evidence="16">
    <location>
        <begin position="1362"/>
        <end position="1384"/>
    </location>
</feature>
<feature type="helix" evidence="16">
    <location>
        <begin position="1389"/>
        <end position="1392"/>
    </location>
</feature>
<feature type="helix" evidence="16">
    <location>
        <begin position="1397"/>
        <end position="1425"/>
    </location>
</feature>
<feature type="helix" evidence="16">
    <location>
        <begin position="1427"/>
        <end position="1431"/>
    </location>
</feature>
<feature type="helix" evidence="16">
    <location>
        <begin position="1434"/>
        <end position="1442"/>
    </location>
</feature>
<feature type="helix" evidence="16">
    <location>
        <begin position="1447"/>
        <end position="1454"/>
    </location>
</feature>
<feature type="turn" evidence="16">
    <location>
        <begin position="1455"/>
        <end position="1457"/>
    </location>
</feature>
<feature type="strand" evidence="16">
    <location>
        <begin position="1458"/>
        <end position="1460"/>
    </location>
</feature>
<feature type="strand" evidence="16">
    <location>
        <begin position="1462"/>
        <end position="1464"/>
    </location>
</feature>
<feature type="strand" evidence="16">
    <location>
        <begin position="1475"/>
        <end position="1477"/>
    </location>
</feature>
<feature type="strand" evidence="16">
    <location>
        <begin position="1483"/>
        <end position="1485"/>
    </location>
</feature>
<feature type="helix" evidence="16">
    <location>
        <begin position="1496"/>
        <end position="1523"/>
    </location>
</feature>
<feature type="strand" evidence="16">
    <location>
        <begin position="1524"/>
        <end position="1526"/>
    </location>
</feature>
<feature type="turn" evidence="16">
    <location>
        <begin position="1531"/>
        <end position="1533"/>
    </location>
</feature>
<feature type="helix" evidence="16">
    <location>
        <begin position="1536"/>
        <end position="1557"/>
    </location>
</feature>
<feature type="helix" evidence="16">
    <location>
        <begin position="1561"/>
        <end position="1580"/>
    </location>
</feature>
<feature type="strand" evidence="16">
    <location>
        <begin position="1583"/>
        <end position="1586"/>
    </location>
</feature>
<feature type="helix" evidence="16">
    <location>
        <begin position="1593"/>
        <end position="1616"/>
    </location>
</feature>
<feature type="helix" evidence="16">
    <location>
        <begin position="1624"/>
        <end position="1628"/>
    </location>
</feature>
<feature type="strand" evidence="16">
    <location>
        <begin position="1631"/>
        <end position="1634"/>
    </location>
</feature>
<feature type="strand" evidence="16">
    <location>
        <begin position="1640"/>
        <end position="1644"/>
    </location>
</feature>
<feature type="strand" evidence="16">
    <location>
        <begin position="1647"/>
        <end position="1650"/>
    </location>
</feature>
<feature type="helix" evidence="16">
    <location>
        <begin position="1666"/>
        <end position="1681"/>
    </location>
</feature>
<feature type="strand" evidence="16">
    <location>
        <begin position="1684"/>
        <end position="1688"/>
    </location>
</feature>
<feature type="helix" evidence="16">
    <location>
        <begin position="1695"/>
        <end position="1705"/>
    </location>
</feature>
<feature type="strand" evidence="16">
    <location>
        <begin position="1710"/>
        <end position="1714"/>
    </location>
</feature>
<feature type="helix" evidence="16">
    <location>
        <begin position="1721"/>
        <end position="1734"/>
    </location>
</feature>
<feature type="strand" evidence="16">
    <location>
        <begin position="1737"/>
        <end position="1742"/>
    </location>
</feature>
<feature type="helix" evidence="16">
    <location>
        <begin position="1748"/>
        <end position="1767"/>
    </location>
</feature>
<feature type="strand" evidence="16">
    <location>
        <begin position="1770"/>
        <end position="1774"/>
    </location>
</feature>
<feature type="strand" evidence="16">
    <location>
        <begin position="1777"/>
        <end position="1780"/>
    </location>
</feature>
<feature type="strand" evidence="16">
    <location>
        <begin position="1786"/>
        <end position="1791"/>
    </location>
</feature>
<feature type="turn" evidence="16">
    <location>
        <begin position="1796"/>
        <end position="1798"/>
    </location>
</feature>
<feature type="helix" evidence="16">
    <location>
        <begin position="1806"/>
        <end position="1809"/>
    </location>
</feature>
<feature type="strand" evidence="16">
    <location>
        <begin position="1812"/>
        <end position="1816"/>
    </location>
</feature>
<feature type="helix" evidence="16">
    <location>
        <begin position="1823"/>
        <end position="1833"/>
    </location>
</feature>
<feature type="helix" evidence="16">
    <location>
        <begin position="1838"/>
        <end position="1855"/>
    </location>
</feature>
<feature type="helix" evidence="16">
    <location>
        <begin position="1866"/>
        <end position="1886"/>
    </location>
</feature>
<feature type="helix" evidence="16">
    <location>
        <begin position="1891"/>
        <end position="1906"/>
    </location>
</feature>
<feature type="turn" evidence="16">
    <location>
        <begin position="1907"/>
        <end position="1909"/>
    </location>
</feature>
<feature type="helix" evidence="16">
    <location>
        <begin position="1912"/>
        <end position="1925"/>
    </location>
</feature>
<feature type="turn" evidence="16">
    <location>
        <begin position="1927"/>
        <end position="1929"/>
    </location>
</feature>
<feature type="helix" evidence="16">
    <location>
        <begin position="1938"/>
        <end position="1950"/>
    </location>
</feature>
<feature type="helix" evidence="16">
    <location>
        <begin position="1956"/>
        <end position="1971"/>
    </location>
</feature>
<feature type="strand" evidence="16">
    <location>
        <begin position="1973"/>
        <end position="1978"/>
    </location>
</feature>
<feature type="helix" evidence="16">
    <location>
        <begin position="1985"/>
        <end position="1999"/>
    </location>
</feature>
<feature type="strand" evidence="16">
    <location>
        <begin position="2004"/>
        <end position="2008"/>
    </location>
</feature>
<feature type="turn" evidence="16">
    <location>
        <begin position="2010"/>
        <end position="2012"/>
    </location>
</feature>
<feature type="helix" evidence="16">
    <location>
        <begin position="2015"/>
        <end position="2019"/>
    </location>
</feature>
<feature type="strand" evidence="16">
    <location>
        <begin position="2021"/>
        <end position="2023"/>
    </location>
</feature>
<feature type="turn" evidence="16">
    <location>
        <begin position="2024"/>
        <end position="2027"/>
    </location>
</feature>
<feature type="strand" evidence="16">
    <location>
        <begin position="2028"/>
        <end position="2030"/>
    </location>
</feature>
<feature type="helix" evidence="16">
    <location>
        <begin position="2033"/>
        <end position="2043"/>
    </location>
</feature>
<feature type="strand" evidence="16">
    <location>
        <begin position="2050"/>
        <end position="2056"/>
    </location>
</feature>
<feature type="helix" evidence="16">
    <location>
        <begin position="2060"/>
        <end position="2063"/>
    </location>
</feature>
<feature type="helix" evidence="16">
    <location>
        <begin position="2064"/>
        <end position="2066"/>
    </location>
</feature>
<feature type="helix" evidence="16">
    <location>
        <begin position="2067"/>
        <end position="2070"/>
    </location>
</feature>
<feature type="strand" evidence="16">
    <location>
        <begin position="2071"/>
        <end position="2073"/>
    </location>
</feature>
<feature type="strand" evidence="16">
    <location>
        <begin position="2090"/>
        <end position="2097"/>
    </location>
</feature>
<feature type="helix" evidence="16">
    <location>
        <begin position="2104"/>
        <end position="2109"/>
    </location>
</feature>
<feature type="strand" evidence="16">
    <location>
        <begin position="2110"/>
        <end position="2114"/>
    </location>
</feature>
<feature type="turn" evidence="16">
    <location>
        <begin position="2117"/>
        <end position="2119"/>
    </location>
</feature>
<feature type="helix" evidence="16">
    <location>
        <begin position="2122"/>
        <end position="2132"/>
    </location>
</feature>
<feature type="helix" evidence="16">
    <location>
        <begin position="2138"/>
        <end position="2159"/>
    </location>
</feature>
<feature type="helix" evidence="16">
    <location>
        <begin position="2168"/>
        <end position="2177"/>
    </location>
</feature>
<feature type="helix" evidence="16">
    <location>
        <begin position="2185"/>
        <end position="2197"/>
    </location>
</feature>
<feature type="helix" evidence="16">
    <location>
        <begin position="2202"/>
        <end position="2215"/>
    </location>
</feature>
<feature type="strand" evidence="16">
    <location>
        <begin position="2216"/>
        <end position="2218"/>
    </location>
</feature>
<feature type="helix" evidence="16">
    <location>
        <begin position="2226"/>
        <end position="2228"/>
    </location>
</feature>
<feature type="turn" evidence="16">
    <location>
        <begin position="2233"/>
        <end position="2235"/>
    </location>
</feature>
<feature type="turn" evidence="16">
    <location>
        <begin position="2251"/>
        <end position="2254"/>
    </location>
</feature>
<feature type="strand" evidence="16">
    <location>
        <begin position="2256"/>
        <end position="2259"/>
    </location>
</feature>
<feature type="helix" evidence="16">
    <location>
        <begin position="2266"/>
        <end position="2279"/>
    </location>
</feature>
<feature type="helix" evidence="16">
    <location>
        <begin position="2281"/>
        <end position="2283"/>
    </location>
</feature>
<feature type="strand" evidence="16">
    <location>
        <begin position="2287"/>
        <end position="2290"/>
    </location>
</feature>
<feature type="helix" evidence="16">
    <location>
        <begin position="2297"/>
        <end position="2307"/>
    </location>
</feature>
<feature type="strand" evidence="16">
    <location>
        <begin position="2312"/>
        <end position="2316"/>
    </location>
</feature>
<feature type="helix" evidence="16">
    <location>
        <begin position="2324"/>
        <end position="2332"/>
    </location>
</feature>
<feature type="strand" evidence="16">
    <location>
        <begin position="2341"/>
        <end position="2343"/>
    </location>
</feature>
<feature type="strand" evidence="16">
    <location>
        <begin position="2348"/>
        <end position="2350"/>
    </location>
</feature>
<feature type="strand" evidence="16">
    <location>
        <begin position="2352"/>
        <end position="2359"/>
    </location>
</feature>
<feature type="helix" evidence="16">
    <location>
        <begin position="2373"/>
        <end position="2384"/>
    </location>
</feature>
<feature type="strand" evidence="16">
    <location>
        <begin position="2385"/>
        <end position="2388"/>
    </location>
</feature>
<feature type="strand" evidence="16">
    <location>
        <begin position="2390"/>
        <end position="2392"/>
    </location>
</feature>
<feature type="strand" evidence="16">
    <location>
        <begin position="2394"/>
        <end position="2397"/>
    </location>
</feature>
<feature type="strand" evidence="16">
    <location>
        <begin position="2401"/>
        <end position="2406"/>
    </location>
</feature>
<feature type="helix" evidence="16">
    <location>
        <begin position="2419"/>
        <end position="2422"/>
    </location>
</feature>
<feature type="strand" evidence="16">
    <location>
        <begin position="2425"/>
        <end position="2429"/>
    </location>
</feature>
<feature type="helix" evidence="16">
    <location>
        <begin position="2435"/>
        <end position="2452"/>
    </location>
</feature>
<feature type="strand" evidence="16">
    <location>
        <begin position="2455"/>
        <end position="2461"/>
    </location>
</feature>
<feature type="helix" evidence="16">
    <location>
        <begin position="2463"/>
        <end position="2483"/>
    </location>
</feature>
<feature type="turn" evidence="16">
    <location>
        <begin position="2486"/>
        <end position="2488"/>
    </location>
</feature>
<feature type="helix" evidence="16">
    <location>
        <begin position="2496"/>
        <end position="2504"/>
    </location>
</feature>
<feature type="helix" evidence="16">
    <location>
        <begin position="2505"/>
        <end position="2508"/>
    </location>
</feature>
<feature type="helix" evidence="16">
    <location>
        <begin position="2520"/>
        <end position="2534"/>
    </location>
</feature>
<feature type="turn" evidence="16">
    <location>
        <begin position="2535"/>
        <end position="2538"/>
    </location>
</feature>
<feature type="helix" evidence="16">
    <location>
        <begin position="2542"/>
        <end position="2559"/>
    </location>
</feature>
<feature type="strand" evidence="16">
    <location>
        <begin position="2560"/>
        <end position="2562"/>
    </location>
</feature>
<feature type="strand" evidence="16">
    <location>
        <begin position="2571"/>
        <end position="2577"/>
    </location>
</feature>
<feature type="helix" evidence="16">
    <location>
        <begin position="2579"/>
        <end position="2581"/>
    </location>
</feature>
<feature type="strand" evidence="16">
    <location>
        <begin position="2599"/>
        <end position="2603"/>
    </location>
</feature>
<feature type="helix" evidence="16">
    <location>
        <begin position="2604"/>
        <end position="2621"/>
    </location>
</feature>
<feature type="helix" evidence="16">
    <location>
        <begin position="2631"/>
        <end position="2645"/>
    </location>
</feature>
<feature type="strand" evidence="16">
    <location>
        <begin position="2651"/>
        <end position="2654"/>
    </location>
</feature>
<feature type="helix" evidence="16">
    <location>
        <begin position="2661"/>
        <end position="2672"/>
    </location>
</feature>
<feature type="strand" evidence="16">
    <location>
        <begin position="2675"/>
        <end position="2677"/>
    </location>
</feature>
<feature type="helix" evidence="16">
    <location>
        <begin position="2687"/>
        <end position="2702"/>
    </location>
</feature>
<feature type="strand" evidence="16">
    <location>
        <begin position="2708"/>
        <end position="2713"/>
    </location>
</feature>
<feature type="helix" evidence="16">
    <location>
        <begin position="2714"/>
        <end position="2716"/>
    </location>
</feature>
<feature type="helix" evidence="16">
    <location>
        <begin position="2721"/>
        <end position="2732"/>
    </location>
</feature>
<feature type="turn" evidence="16">
    <location>
        <begin position="2736"/>
        <end position="2738"/>
    </location>
</feature>
<feature type="helix" evidence="16">
    <location>
        <begin position="2741"/>
        <end position="2758"/>
    </location>
</feature>
<feature type="helix" evidence="16">
    <location>
        <begin position="2764"/>
        <end position="2775"/>
    </location>
</feature>
<feature type="strand" evidence="16">
    <location>
        <begin position="2776"/>
        <end position="2782"/>
    </location>
</feature>
<feature type="strand" evidence="16">
    <location>
        <begin position="2784"/>
        <end position="2786"/>
    </location>
</feature>
<feature type="helix" evidence="16">
    <location>
        <begin position="2789"/>
        <end position="2795"/>
    </location>
</feature>
<feature type="helix" evidence="16">
    <location>
        <begin position="2798"/>
        <end position="2802"/>
    </location>
</feature>
<feature type="strand" evidence="16">
    <location>
        <begin position="2803"/>
        <end position="2807"/>
    </location>
</feature>
<feature type="helix" evidence="16">
    <location>
        <begin position="2813"/>
        <end position="2825"/>
    </location>
</feature>
<feature type="helix" evidence="16">
    <location>
        <begin position="2849"/>
        <end position="2862"/>
    </location>
</feature>
<feature type="turn" evidence="16">
    <location>
        <begin position="2863"/>
        <end position="2865"/>
    </location>
</feature>
<feature type="helix" evidence="16">
    <location>
        <begin position="2869"/>
        <end position="2994"/>
    </location>
</feature>
<feature type="helix" evidence="16">
    <location>
        <begin position="2998"/>
        <end position="3004"/>
    </location>
</feature>
<feature type="helix" evidence="16">
    <location>
        <begin position="3011"/>
        <end position="3023"/>
    </location>
</feature>
<feature type="helix" evidence="16">
    <location>
        <begin position="3031"/>
        <end position="3038"/>
    </location>
</feature>
<feature type="helix" evidence="16">
    <location>
        <begin position="3043"/>
        <end position="3046"/>
    </location>
</feature>
<feature type="turn" evidence="16">
    <location>
        <begin position="3047"/>
        <end position="3049"/>
    </location>
</feature>
<feature type="helix" evidence="16">
    <location>
        <begin position="3057"/>
        <end position="3070"/>
    </location>
</feature>
<feature type="turn" evidence="16">
    <location>
        <begin position="3071"/>
        <end position="3073"/>
    </location>
</feature>
<feature type="helix" evidence="16">
    <location>
        <begin position="3076"/>
        <end position="3080"/>
    </location>
</feature>
<feature type="turn" evidence="16">
    <location>
        <begin position="3084"/>
        <end position="3087"/>
    </location>
</feature>
<feature type="helix" evidence="16">
    <location>
        <begin position="3088"/>
        <end position="3197"/>
    </location>
</feature>
<feature type="helix" evidence="16">
    <location>
        <begin position="3200"/>
        <end position="3214"/>
    </location>
</feature>
<feature type="helix" evidence="16">
    <location>
        <begin position="3219"/>
        <end position="3233"/>
    </location>
</feature>
<feature type="helix" evidence="16">
    <location>
        <begin position="3240"/>
        <end position="3244"/>
    </location>
</feature>
<feature type="helix" evidence="16">
    <location>
        <begin position="3247"/>
        <end position="3255"/>
    </location>
</feature>
<feature type="helix" evidence="16">
    <location>
        <begin position="3262"/>
        <end position="3270"/>
    </location>
</feature>
<feature type="strand" evidence="16">
    <location>
        <begin position="3275"/>
        <end position="3281"/>
    </location>
</feature>
<feature type="helix" evidence="16">
    <location>
        <begin position="3286"/>
        <end position="3295"/>
    </location>
</feature>
<feature type="strand" evidence="16">
    <location>
        <begin position="3301"/>
        <end position="3303"/>
    </location>
</feature>
<feature type="helix" evidence="16">
    <location>
        <begin position="3310"/>
        <end position="3320"/>
    </location>
</feature>
<feature type="strand" evidence="16">
    <location>
        <begin position="3324"/>
        <end position="3327"/>
    </location>
</feature>
<feature type="helix" evidence="16">
    <location>
        <begin position="3334"/>
        <end position="3336"/>
    </location>
</feature>
<feature type="helix" evidence="16">
    <location>
        <begin position="3337"/>
        <end position="3340"/>
    </location>
</feature>
<feature type="strand" evidence="16">
    <location>
        <begin position="3344"/>
        <end position="3347"/>
    </location>
</feature>
<feature type="strand" evidence="16">
    <location>
        <begin position="3350"/>
        <end position="3355"/>
    </location>
</feature>
<feature type="strand" evidence="16">
    <location>
        <begin position="3358"/>
        <end position="3362"/>
    </location>
</feature>
<feature type="strand" evidence="16">
    <location>
        <begin position="3370"/>
        <end position="3375"/>
    </location>
</feature>
<feature type="helix" evidence="16">
    <location>
        <begin position="3381"/>
        <end position="3384"/>
    </location>
</feature>
<feature type="strand" evidence="16">
    <location>
        <begin position="3387"/>
        <end position="3391"/>
    </location>
</feature>
<feature type="helix" evidence="16">
    <location>
        <begin position="3396"/>
        <end position="3411"/>
    </location>
</feature>
<feature type="helix" evidence="16">
    <location>
        <begin position="3413"/>
        <end position="3446"/>
    </location>
</feature>
<feature type="strand" evidence="16">
    <location>
        <begin position="3447"/>
        <end position="3449"/>
    </location>
</feature>
<feature type="turn" evidence="16">
    <location>
        <begin position="3451"/>
        <end position="3453"/>
    </location>
</feature>
<feature type="helix" evidence="16">
    <location>
        <begin position="3455"/>
        <end position="3490"/>
    </location>
</feature>
<feature type="helix" evidence="16">
    <location>
        <begin position="3493"/>
        <end position="3512"/>
    </location>
</feature>
<feature type="helix" evidence="16">
    <location>
        <begin position="3520"/>
        <end position="3532"/>
    </location>
</feature>
<feature type="helix" evidence="16">
    <location>
        <begin position="3540"/>
        <end position="3562"/>
    </location>
</feature>
<feature type="helix" evidence="16">
    <location>
        <begin position="3565"/>
        <end position="3579"/>
    </location>
</feature>
<feature type="strand" evidence="16">
    <location>
        <begin position="3582"/>
        <end position="3584"/>
    </location>
</feature>
<feature type="helix" evidence="16">
    <location>
        <begin position="3588"/>
        <end position="3593"/>
    </location>
</feature>
<feature type="strand" evidence="16">
    <location>
        <begin position="3616"/>
        <end position="3618"/>
    </location>
</feature>
<feature type="helix" evidence="16">
    <location>
        <begin position="3620"/>
        <end position="3632"/>
    </location>
</feature>
<feature type="helix" evidence="16">
    <location>
        <begin position="3634"/>
        <end position="3640"/>
    </location>
</feature>
<feature type="turn" evidence="16">
    <location>
        <begin position="3641"/>
        <end position="3644"/>
    </location>
</feature>
<feature type="helix" evidence="16">
    <location>
        <begin position="3647"/>
        <end position="3653"/>
    </location>
</feature>
<feature type="helix" evidence="16">
    <location>
        <begin position="3658"/>
        <end position="3660"/>
    </location>
</feature>
<feature type="helix" evidence="16">
    <location>
        <begin position="3663"/>
        <end position="3668"/>
    </location>
</feature>
<feature type="helix" evidence="16">
    <location>
        <begin position="3673"/>
        <end position="3681"/>
    </location>
</feature>
<feature type="helix" evidence="16">
    <location>
        <begin position="3683"/>
        <end position="3698"/>
    </location>
</feature>
<feature type="helix" evidence="16">
    <location>
        <begin position="3710"/>
        <end position="3714"/>
    </location>
</feature>
<feature type="strand" evidence="16">
    <location>
        <begin position="3723"/>
        <end position="3726"/>
    </location>
</feature>
<feature type="helix" evidence="16">
    <location>
        <begin position="3734"/>
        <end position="3744"/>
    </location>
</feature>
<feature type="strand" evidence="16">
    <location>
        <begin position="3751"/>
        <end position="3754"/>
    </location>
</feature>
<feature type="helix" evidence="16">
    <location>
        <begin position="3759"/>
        <end position="3773"/>
    </location>
</feature>
<feature type="strand" evidence="16">
    <location>
        <begin position="3776"/>
        <end position="3780"/>
    </location>
</feature>
<feature type="helix" evidence="16">
    <location>
        <begin position="3782"/>
        <end position="3784"/>
    </location>
</feature>
<feature type="turn" evidence="16">
    <location>
        <begin position="3786"/>
        <end position="3788"/>
    </location>
</feature>
<feature type="helix" evidence="16">
    <location>
        <begin position="3789"/>
        <end position="3798"/>
    </location>
</feature>
<feature type="strand" evidence="16">
    <location>
        <begin position="3806"/>
        <end position="3811"/>
    </location>
</feature>
<feature type="helix" evidence="16">
    <location>
        <begin position="3819"/>
        <end position="3823"/>
    </location>
</feature>
<feature type="strand" evidence="16">
    <location>
        <begin position="3824"/>
        <end position="3829"/>
    </location>
</feature>
<feature type="helix" evidence="16">
    <location>
        <begin position="3836"/>
        <end position="3846"/>
    </location>
</feature>
<feature type="helix" evidence="16">
    <location>
        <begin position="3849"/>
        <end position="3852"/>
    </location>
</feature>
<feature type="turn" evidence="16">
    <location>
        <begin position="3855"/>
        <end position="3860"/>
    </location>
</feature>
<feature type="helix" evidence="16">
    <location>
        <begin position="3861"/>
        <end position="3877"/>
    </location>
</feature>
<feature type="turn" evidence="16">
    <location>
        <begin position="3881"/>
        <end position="3884"/>
    </location>
</feature>
<feature type="helix" evidence="16">
    <location>
        <begin position="3893"/>
        <end position="3908"/>
    </location>
</feature>
<feature type="strand" evidence="16">
    <location>
        <begin position="3909"/>
        <end position="3911"/>
    </location>
</feature>
<feature type="helix" evidence="16">
    <location>
        <begin position="3916"/>
        <end position="3925"/>
    </location>
</feature>
<feature type="turn" evidence="16">
    <location>
        <begin position="3928"/>
        <end position="3930"/>
    </location>
</feature>
<feature type="helix" evidence="16">
    <location>
        <begin position="3934"/>
        <end position="3948"/>
    </location>
</feature>
<feature type="turn" evidence="16">
    <location>
        <begin position="3967"/>
        <end position="3969"/>
    </location>
</feature>
<feature type="helix" evidence="16">
    <location>
        <begin position="3977"/>
        <end position="3986"/>
    </location>
</feature>
<feature type="helix" evidence="16">
    <location>
        <begin position="3993"/>
        <end position="3996"/>
    </location>
</feature>
<feature type="helix" evidence="16">
    <location>
        <begin position="4001"/>
        <end position="4020"/>
    </location>
</feature>
<feature type="helix" evidence="16">
    <location>
        <begin position="4031"/>
        <end position="4036"/>
    </location>
</feature>
<feature type="helix" evidence="16">
    <location>
        <begin position="4041"/>
        <end position="4051"/>
    </location>
</feature>
<feature type="helix" evidence="16">
    <location>
        <begin position="4055"/>
        <end position="4059"/>
    </location>
</feature>
<feature type="helix" evidence="16">
    <location>
        <begin position="4071"/>
        <end position="4102"/>
    </location>
</feature>
<feature type="helix" evidence="16">
    <location>
        <begin position="4109"/>
        <end position="4120"/>
    </location>
</feature>
<feature type="helix" evidence="16">
    <location>
        <begin position="4125"/>
        <end position="4130"/>
    </location>
</feature>
<feature type="helix" evidence="16">
    <location>
        <begin position="4137"/>
        <end position="4159"/>
    </location>
</feature>
<feature type="turn" evidence="16">
    <location>
        <begin position="4163"/>
        <end position="4165"/>
    </location>
</feature>
<feature type="helix" evidence="16">
    <location>
        <begin position="4170"/>
        <end position="4172"/>
    </location>
</feature>
<feature type="helix" evidence="16">
    <location>
        <begin position="4176"/>
        <end position="4191"/>
    </location>
</feature>
<feature type="helix" evidence="16">
    <location>
        <begin position="4195"/>
        <end position="4197"/>
    </location>
</feature>
<feature type="strand" evidence="16">
    <location>
        <begin position="4198"/>
        <end position="4202"/>
    </location>
</feature>
<feature type="strand" evidence="16">
    <location>
        <begin position="4204"/>
        <end position="4206"/>
    </location>
</feature>
<feature type="strand" evidence="16">
    <location>
        <begin position="4212"/>
        <end position="4217"/>
    </location>
</feature>
<feature type="strand" evidence="16">
    <location>
        <begin position="4221"/>
        <end position="4228"/>
    </location>
</feature>
<feature type="strand" evidence="16">
    <location>
        <begin position="4231"/>
        <end position="4233"/>
    </location>
</feature>
<feature type="strand" evidence="16">
    <location>
        <begin position="4237"/>
        <end position="4239"/>
    </location>
</feature>
<feature type="strand" evidence="16">
    <location>
        <begin position="4241"/>
        <end position="4244"/>
    </location>
</feature>
<feature type="strand" evidence="16">
    <location>
        <begin position="4248"/>
        <end position="4254"/>
    </location>
</feature>
<feature type="turn" evidence="16">
    <location>
        <begin position="4263"/>
        <end position="4265"/>
    </location>
</feature>
<feature type="strand" evidence="16">
    <location>
        <begin position="4266"/>
        <end position="4276"/>
    </location>
</feature>
<feature type="strand" evidence="16">
    <location>
        <begin position="4279"/>
        <end position="4287"/>
    </location>
</feature>
<feature type="helix" evidence="16">
    <location>
        <begin position="4292"/>
        <end position="4298"/>
    </location>
</feature>
<feature type="strand" evidence="16">
    <location>
        <begin position="4301"/>
        <end position="4303"/>
    </location>
</feature>